<sequence>MMSASRLAGTLIPAMAFLSCVRPESWEPCVEVVPNITYQCMELNFYKIPDNLPFSTKNLDLSFNPLRHLGSYSFFSFPELQVLDLSRCEIQTIEDGAYQSLSHLSTLILTGNPIQSLALGAFSGLSSLQKLVAVETNLASLENFPIGHLKTLKELNVAHNLIQSFKLPEYFSNLTNLEHLDLSSNKIQSIYCTDLRVLHQMPLLNLSLDLSLNPMNFIQPGAFKEIRLHKLTLRNNFDSLNVMKTCIQGLAGLEVHRLVLGEFRNEGNLEKFDKSALEGLCNLTIEEFRLAYLDYYLDDIIDLFNCLTNVSSFSLVSVTIERVKDFSYNFGWQHLELVNCKFGQFPTLKLKSLKRLTFTSNKGGNAFSEVDLPSLEFLDLSRNGLSFKGCCSQSDFGTTSLKYLDLSFNGVITMSSNFLGLEQLEHLDFQHSNLKQMSEFSVFLSLRNLIYLDISHTHTRVAFNGIFNGLSSLEVLKMAGNSFQENFLPDIFTELRNLTFLDLSQCQLEQLSPTAFNSLSSLQVLNMSHNNFFSLDTFPYKCLNSLQVLDYSLNHIMTSKKQELQHFPSSLAFLNLTQNDFACTCEHQSFLQWIKDQRQLLVEVERMECATPSDKQGMPVLSLNITCQMNKTIIGVSVLSVLVVSVVAVLVYKFYFHLMLLAGCIKYGRGENIYDAFVIYSSQDEDWVRNELVKNLEEGVPPFQLCLHYRDFIPGVAIAANIIHEGFHKSRKVIVVVSQHFIQSRWCIFEYEIAQTWQFLSSRAGIIFIVLQKVEKTLLRQQVELYRLLSRNTYLEWEDSVLGRHIFWRRLRKALLDGKSWNPEGTVGTGCNWQEATSI</sequence>
<dbReference type="EMBL" id="U93091">
    <property type="protein sequence ID" value="AAC80227.1"/>
    <property type="molecule type" value="mRNA"/>
</dbReference>
<dbReference type="EMBL" id="AB445638">
    <property type="protein sequence ID" value="BAG55035.1"/>
    <property type="molecule type" value="mRNA"/>
</dbReference>
<dbReference type="EMBL" id="DQ018107">
    <property type="protein sequence ID" value="AAY82267.1"/>
    <property type="molecule type" value="Genomic_DNA"/>
</dbReference>
<dbReference type="EMBL" id="DQ018108">
    <property type="protein sequence ID" value="AAY82268.1"/>
    <property type="molecule type" value="Genomic_DNA"/>
</dbReference>
<dbReference type="EMBL" id="DQ018109">
    <property type="protein sequence ID" value="AAY82269.1"/>
    <property type="molecule type" value="Genomic_DNA"/>
</dbReference>
<dbReference type="EMBL" id="AK290053">
    <property type="protein sequence ID" value="BAF82742.1"/>
    <property type="molecule type" value="mRNA"/>
</dbReference>
<dbReference type="EMBL" id="AK293068">
    <property type="protein sequence ID" value="BAF85757.1"/>
    <property type="molecule type" value="mRNA"/>
</dbReference>
<dbReference type="EMBL" id="AK303730">
    <property type="protein sequence ID" value="BAG64706.1"/>
    <property type="molecule type" value="mRNA"/>
</dbReference>
<dbReference type="EMBL" id="AL160272">
    <property type="status" value="NOT_ANNOTATED_CDS"/>
    <property type="molecule type" value="Genomic_DNA"/>
</dbReference>
<dbReference type="EMBL" id="CH471090">
    <property type="protein sequence ID" value="EAW87448.1"/>
    <property type="molecule type" value="Genomic_DNA"/>
</dbReference>
<dbReference type="EMBL" id="CH471090">
    <property type="protein sequence ID" value="EAW87451.1"/>
    <property type="molecule type" value="Genomic_DNA"/>
</dbReference>
<dbReference type="EMBL" id="BC117422">
    <property type="protein sequence ID" value="AAI17423.1"/>
    <property type="molecule type" value="mRNA"/>
</dbReference>
<dbReference type="EMBL" id="EF535831">
    <property type="protein sequence ID" value="ABU41662.1"/>
    <property type="molecule type" value="Genomic_DNA"/>
</dbReference>
<dbReference type="EMBL" id="EF535832">
    <property type="protein sequence ID" value="ABU41663.1"/>
    <property type="molecule type" value="Genomic_DNA"/>
</dbReference>
<dbReference type="EMBL" id="EF535833">
    <property type="protein sequence ID" value="ABU41664.1"/>
    <property type="molecule type" value="Genomic_DNA"/>
</dbReference>
<dbReference type="EMBL" id="AF177765">
    <property type="protein sequence ID" value="AAF05316.1"/>
    <property type="molecule type" value="Genomic_DNA"/>
</dbReference>
<dbReference type="EMBL" id="AF177766">
    <property type="protein sequence ID" value="AAF07823.1"/>
    <property type="molecule type" value="Genomic_DNA"/>
</dbReference>
<dbReference type="EMBL" id="AF172171">
    <property type="protein sequence ID" value="AAF89753.1"/>
    <property type="molecule type" value="Genomic_DNA"/>
</dbReference>
<dbReference type="EMBL" id="AF172169">
    <property type="protein sequence ID" value="AAF89753.1"/>
    <property type="status" value="JOINED"/>
    <property type="molecule type" value="Genomic_DNA"/>
</dbReference>
<dbReference type="EMBL" id="AF172170">
    <property type="protein sequence ID" value="AAF89753.1"/>
    <property type="status" value="JOINED"/>
    <property type="molecule type" value="Genomic_DNA"/>
</dbReference>
<dbReference type="EMBL" id="U88880">
    <property type="protein sequence ID" value="AAC34135.1"/>
    <property type="molecule type" value="mRNA"/>
</dbReference>
<dbReference type="CCDS" id="CCDS6818.1">
    <molecule id="O00206-1"/>
</dbReference>
<dbReference type="RefSeq" id="NP_003257.1">
    <molecule id="O00206-2"/>
    <property type="nucleotide sequence ID" value="NM_003266.4"/>
</dbReference>
<dbReference type="RefSeq" id="NP_612564.1">
    <molecule id="O00206-1"/>
    <property type="nucleotide sequence ID" value="NM_138554.5"/>
</dbReference>
<dbReference type="RefSeq" id="NP_612567.1">
    <molecule id="O00206-3"/>
    <property type="nucleotide sequence ID" value="NM_138557.3"/>
</dbReference>
<dbReference type="PDB" id="2Z62">
    <property type="method" value="X-ray"/>
    <property type="resolution" value="1.70 A"/>
    <property type="chains" value="A=27-228"/>
</dbReference>
<dbReference type="PDB" id="2Z63">
    <property type="method" value="X-ray"/>
    <property type="resolution" value="2.00 A"/>
    <property type="chains" value="A=27-527"/>
</dbReference>
<dbReference type="PDB" id="2Z65">
    <property type="method" value="X-ray"/>
    <property type="resolution" value="2.70 A"/>
    <property type="chains" value="A/B=27-228"/>
</dbReference>
<dbReference type="PDB" id="2Z66">
    <property type="method" value="X-ray"/>
    <property type="resolution" value="1.90 A"/>
    <property type="chains" value="A/B/C/D=381-627"/>
</dbReference>
<dbReference type="PDB" id="3FXI">
    <property type="method" value="X-ray"/>
    <property type="resolution" value="3.10 A"/>
    <property type="chains" value="A/B=27-631"/>
</dbReference>
<dbReference type="PDB" id="3UL7">
    <property type="method" value="X-ray"/>
    <property type="resolution" value="2.37 A"/>
    <property type="chains" value="A=28-226"/>
</dbReference>
<dbReference type="PDB" id="3UL8">
    <property type="method" value="X-ray"/>
    <property type="resolution" value="2.50 A"/>
    <property type="chains" value="A=27-228"/>
</dbReference>
<dbReference type="PDB" id="3UL9">
    <property type="method" value="X-ray"/>
    <property type="resolution" value="2.45 A"/>
    <property type="chains" value="A=28-228"/>
</dbReference>
<dbReference type="PDB" id="3ULA">
    <property type="method" value="X-ray"/>
    <property type="resolution" value="3.60 A"/>
    <property type="chains" value="A/C=27-228"/>
</dbReference>
<dbReference type="PDB" id="4G8A">
    <property type="method" value="X-ray"/>
    <property type="resolution" value="2.40 A"/>
    <property type="chains" value="A/B=23-629"/>
</dbReference>
<dbReference type="PDB" id="5NAM">
    <property type="method" value="NMR"/>
    <property type="chains" value="A=623-670"/>
</dbReference>
<dbReference type="PDB" id="5NAO">
    <property type="method" value="NMR"/>
    <property type="chains" value="A=623-657"/>
</dbReference>
<dbReference type="PDB" id="8WO1">
    <property type="method" value="EM"/>
    <property type="resolution" value="2.24 A"/>
    <property type="chains" value="A/B=27-631"/>
</dbReference>
<dbReference type="PDB" id="8WTA">
    <property type="method" value="EM"/>
    <property type="resolution" value="2.90 A"/>
    <property type="chains" value="A/B=27-631"/>
</dbReference>
<dbReference type="PDBsum" id="2Z62"/>
<dbReference type="PDBsum" id="2Z63"/>
<dbReference type="PDBsum" id="2Z65"/>
<dbReference type="PDBsum" id="2Z66"/>
<dbReference type="PDBsum" id="3FXI"/>
<dbReference type="PDBsum" id="3UL7"/>
<dbReference type="PDBsum" id="3UL8"/>
<dbReference type="PDBsum" id="3UL9"/>
<dbReference type="PDBsum" id="3ULA"/>
<dbReference type="PDBsum" id="4G8A"/>
<dbReference type="PDBsum" id="5NAM"/>
<dbReference type="PDBsum" id="5NAO"/>
<dbReference type="PDBsum" id="8WO1"/>
<dbReference type="PDBsum" id="8WTA"/>
<dbReference type="EMDB" id="EMD-37677"/>
<dbReference type="EMDB" id="EMD-37831"/>
<dbReference type="SMR" id="O00206"/>
<dbReference type="BioGRID" id="112954">
    <property type="interactions" value="44"/>
</dbReference>
<dbReference type="ComplexPortal" id="CPX-2545">
    <property type="entry name" value="LY96-TLR4 toll-like receptor complex"/>
</dbReference>
<dbReference type="ComplexPortal" id="CPX-945">
    <property type="entry name" value="TLR4-TLR6 toll-like receptor complex"/>
</dbReference>
<dbReference type="CORUM" id="O00206"/>
<dbReference type="DIP" id="DIP-34769N"/>
<dbReference type="ELM" id="O00206"/>
<dbReference type="FunCoup" id="O00206">
    <property type="interactions" value="903"/>
</dbReference>
<dbReference type="IntAct" id="O00206">
    <property type="interactions" value="35"/>
</dbReference>
<dbReference type="MINT" id="O00206"/>
<dbReference type="STRING" id="9606.ENSP00000363089"/>
<dbReference type="BindingDB" id="O00206"/>
<dbReference type="ChEMBL" id="CHEMBL5255"/>
<dbReference type="DrugBank" id="DB02767">
    <property type="generic name" value="(R)-3-hydroxytetradecanoic acid"/>
</dbReference>
<dbReference type="DrugBank" id="DB00924">
    <property type="generic name" value="Cyclobenzaprine"/>
</dbReference>
<dbReference type="DrugBank" id="DB06447">
    <property type="generic name" value="E5531"/>
</dbReference>
<dbReference type="DrugBank" id="DB04933">
    <property type="generic name" value="Eritoran"/>
</dbReference>
<dbReference type="DrugBank" id="DB05475">
    <property type="generic name" value="Golotimod"/>
</dbReference>
<dbReference type="DrugBank" id="DB03017">
    <property type="generic name" value="Lauric acid"/>
</dbReference>
<dbReference type="DrugBank" id="DB13615">
    <property type="generic name" value="Mifamurtide"/>
</dbReference>
<dbReference type="DrugBank" id="DB08231">
    <property type="generic name" value="Myristic acid"/>
</dbReference>
<dbReference type="DrugBank" id="DB01183">
    <property type="generic name" value="Naloxone"/>
</dbReference>
<dbReference type="DrugBank" id="DB11193">
    <property type="generic name" value="Papain"/>
</dbReference>
<dbReference type="DrugBank" id="DB05943">
    <property type="generic name" value="Resatorvid"/>
</dbReference>
<dbReference type="DrugCentral" id="O00206"/>
<dbReference type="GuidetoPHARMACOLOGY" id="1754"/>
<dbReference type="TCDB" id="8.A.43.1.9">
    <property type="family name" value="the neat-domain containing methaemoglobin heme sequestration (n-mhs) family"/>
</dbReference>
<dbReference type="GlyCosmos" id="O00206">
    <property type="glycosylation" value="10 sites, No reported glycans"/>
</dbReference>
<dbReference type="GlyGen" id="O00206">
    <property type="glycosylation" value="17 sites, 1 O-linked glycan (1 site)"/>
</dbReference>
<dbReference type="iPTMnet" id="O00206"/>
<dbReference type="PhosphoSitePlus" id="O00206"/>
<dbReference type="BioMuta" id="TLR4"/>
<dbReference type="jPOST" id="O00206"/>
<dbReference type="MassIVE" id="O00206"/>
<dbReference type="PaxDb" id="9606-ENSP00000363089"/>
<dbReference type="PeptideAtlas" id="O00206"/>
<dbReference type="ProteomicsDB" id="47779">
    <molecule id="O00206-1"/>
</dbReference>
<dbReference type="ProteomicsDB" id="47780">
    <molecule id="O00206-2"/>
</dbReference>
<dbReference type="ProteomicsDB" id="47781">
    <molecule id="O00206-3"/>
</dbReference>
<dbReference type="ABCD" id="O00206">
    <property type="antibodies" value="25 sequenced antibodies"/>
</dbReference>
<dbReference type="Antibodypedia" id="3410">
    <property type="antibodies" value="1876 antibodies from 51 providers"/>
</dbReference>
<dbReference type="DNASU" id="7099"/>
<dbReference type="Ensembl" id="ENST00000355622.8">
    <molecule id="O00206-1"/>
    <property type="protein sequence ID" value="ENSP00000363089.5"/>
    <property type="gene ID" value="ENSG00000136869.16"/>
</dbReference>
<dbReference type="Ensembl" id="ENST00000394487.5">
    <molecule id="O00206-2"/>
    <property type="protein sequence ID" value="ENSP00000377997.4"/>
    <property type="gene ID" value="ENSG00000136869.16"/>
</dbReference>
<dbReference type="GeneID" id="7099"/>
<dbReference type="KEGG" id="hsa:7099"/>
<dbReference type="MANE-Select" id="ENST00000355622.8">
    <property type="protein sequence ID" value="ENSP00000363089.5"/>
    <property type="RefSeq nucleotide sequence ID" value="NM_138554.5"/>
    <property type="RefSeq protein sequence ID" value="NP_612564.1"/>
</dbReference>
<dbReference type="UCSC" id="uc004bjz.5">
    <molecule id="O00206-1"/>
    <property type="organism name" value="human"/>
</dbReference>
<dbReference type="AGR" id="HGNC:11850"/>
<dbReference type="CTD" id="7099"/>
<dbReference type="DisGeNET" id="7099"/>
<dbReference type="GeneCards" id="TLR4"/>
<dbReference type="HGNC" id="HGNC:11850">
    <property type="gene designation" value="TLR4"/>
</dbReference>
<dbReference type="HPA" id="ENSG00000136869">
    <property type="expression patterns" value="Low tissue specificity"/>
</dbReference>
<dbReference type="MalaCards" id="TLR4"/>
<dbReference type="MIM" id="603030">
    <property type="type" value="gene"/>
</dbReference>
<dbReference type="neXtProt" id="NX_O00206"/>
<dbReference type="OpenTargets" id="ENSG00000136869"/>
<dbReference type="Orphanet" id="117">
    <property type="disease" value="Behcet disease"/>
</dbReference>
<dbReference type="PharmGKB" id="PA36552"/>
<dbReference type="VEuPathDB" id="HostDB:ENSG00000136869"/>
<dbReference type="eggNOG" id="KOG4641">
    <property type="taxonomic scope" value="Eukaryota"/>
</dbReference>
<dbReference type="GeneTree" id="ENSGT00940000160778"/>
<dbReference type="HOGENOM" id="CLU_006000_5_0_1"/>
<dbReference type="InParanoid" id="O00206"/>
<dbReference type="OMA" id="CKHSAER"/>
<dbReference type="OrthoDB" id="1421090at2759"/>
<dbReference type="PAN-GO" id="O00206">
    <property type="GO annotations" value="6 GO annotations based on evolutionary models"/>
</dbReference>
<dbReference type="PhylomeDB" id="O00206"/>
<dbReference type="TreeFam" id="TF351113"/>
<dbReference type="PathwayCommons" id="O00206"/>
<dbReference type="Reactome" id="R-HSA-1236974">
    <property type="pathway name" value="ER-Phagosome pathway"/>
</dbReference>
<dbReference type="Reactome" id="R-HSA-140534">
    <property type="pathway name" value="Caspase activation via Death Receptors in the presence of ligand"/>
</dbReference>
<dbReference type="Reactome" id="R-HSA-166016">
    <property type="pathway name" value="Toll Like Receptor 4 (TLR4) Cascade"/>
</dbReference>
<dbReference type="Reactome" id="R-HSA-166058">
    <property type="pathway name" value="MyD88:MAL(TIRAP) cascade initiated on plasma membrane"/>
</dbReference>
<dbReference type="Reactome" id="R-HSA-166166">
    <property type="pathway name" value="MyD88-independent TLR4 cascade"/>
</dbReference>
<dbReference type="Reactome" id="R-HSA-2562578">
    <property type="pathway name" value="TRIF-mediated programmed cell death"/>
</dbReference>
<dbReference type="Reactome" id="R-HSA-5602498">
    <property type="pathway name" value="MyD88 deficiency (TLR2/4)"/>
</dbReference>
<dbReference type="Reactome" id="R-HSA-5603041">
    <property type="pathway name" value="IRAK4 deficiency (TLR2/4)"/>
</dbReference>
<dbReference type="Reactome" id="R-HSA-5686938">
    <property type="pathway name" value="Regulation of TLR by endogenous ligand"/>
</dbReference>
<dbReference type="Reactome" id="R-HSA-936964">
    <property type="pathway name" value="Activation of IRF3, IRF7 mediated by TBK1, IKKEpsilon (IKBKE)"/>
</dbReference>
<dbReference type="Reactome" id="R-HSA-937041">
    <property type="pathway name" value="IKK complex recruitment mediated by RIP1"/>
</dbReference>
<dbReference type="Reactome" id="R-HSA-937072">
    <property type="pathway name" value="TRAF6-mediated induction of TAK1 complex within TLR4 complex"/>
</dbReference>
<dbReference type="Reactome" id="R-HSA-9707616">
    <property type="pathway name" value="Heme signaling"/>
</dbReference>
<dbReference type="Reactome" id="R-HSA-975163">
    <property type="pathway name" value="IRAK2 mediated activation of TAK1 complex upon TLR7/8 or 9 stimulation"/>
</dbReference>
<dbReference type="Reactome" id="R-HSA-9820960">
    <property type="pathway name" value="Respiratory syncytial virus (RSV) attachment and entry"/>
</dbReference>
<dbReference type="Reactome" id="R-HSA-9824878">
    <property type="pathway name" value="Regulation of TBK1, IKKEpsilon (IKBKE)-mediated activation of IRF3, IRF7"/>
</dbReference>
<dbReference type="Reactome" id="R-HSA-9833110">
    <property type="pathway name" value="RSV-host interactions"/>
</dbReference>
<dbReference type="SignaLink" id="O00206"/>
<dbReference type="SIGNOR" id="O00206"/>
<dbReference type="BioGRID-ORCS" id="7099">
    <property type="hits" value="7 hits in 1145 CRISPR screens"/>
</dbReference>
<dbReference type="EvolutionaryTrace" id="O00206"/>
<dbReference type="GeneWiki" id="TLR_4"/>
<dbReference type="GenomeRNAi" id="7099"/>
<dbReference type="Pharos" id="O00206">
    <property type="development level" value="Tchem"/>
</dbReference>
<dbReference type="PRO" id="PR:O00206"/>
<dbReference type="Proteomes" id="UP000005640">
    <property type="component" value="Chromosome 9"/>
</dbReference>
<dbReference type="RNAct" id="O00206">
    <property type="molecule type" value="protein"/>
</dbReference>
<dbReference type="Bgee" id="ENSG00000136869">
    <property type="expression patterns" value="Expressed in monocyte and 156 other cell types or tissues"/>
</dbReference>
<dbReference type="ExpressionAtlas" id="O00206">
    <property type="expression patterns" value="baseline and differential"/>
</dbReference>
<dbReference type="GO" id="GO:0009986">
    <property type="term" value="C:cell surface"/>
    <property type="evidence" value="ECO:0000314"/>
    <property type="project" value="UniProtKB"/>
</dbReference>
<dbReference type="GO" id="GO:0005737">
    <property type="term" value="C:cytoplasm"/>
    <property type="evidence" value="ECO:0000314"/>
    <property type="project" value="BHF-UCL"/>
</dbReference>
<dbReference type="GO" id="GO:0005769">
    <property type="term" value="C:early endosome"/>
    <property type="evidence" value="ECO:0007669"/>
    <property type="project" value="UniProtKB-SubCell"/>
</dbReference>
<dbReference type="GO" id="GO:0010008">
    <property type="term" value="C:endosome membrane"/>
    <property type="evidence" value="ECO:0000314"/>
    <property type="project" value="UniProt"/>
</dbReference>
<dbReference type="GO" id="GO:0009897">
    <property type="term" value="C:external side of plasma membrane"/>
    <property type="evidence" value="ECO:0000314"/>
    <property type="project" value="BHF-UCL"/>
</dbReference>
<dbReference type="GO" id="GO:0046696">
    <property type="term" value="C:lipopolysaccharide receptor complex"/>
    <property type="evidence" value="ECO:0000314"/>
    <property type="project" value="UniProtKB"/>
</dbReference>
<dbReference type="GO" id="GO:0048471">
    <property type="term" value="C:perinuclear region of cytoplasm"/>
    <property type="evidence" value="ECO:0000314"/>
    <property type="project" value="UniProtKB"/>
</dbReference>
<dbReference type="GO" id="GO:0001891">
    <property type="term" value="C:phagocytic cup"/>
    <property type="evidence" value="ECO:0000314"/>
    <property type="project" value="UniProtKB"/>
</dbReference>
<dbReference type="GO" id="GO:0005886">
    <property type="term" value="C:plasma membrane"/>
    <property type="evidence" value="ECO:0000314"/>
    <property type="project" value="UniProtKB"/>
</dbReference>
<dbReference type="GO" id="GO:0043235">
    <property type="term" value="C:receptor complex"/>
    <property type="evidence" value="ECO:0000353"/>
    <property type="project" value="ARUK-UCL"/>
</dbReference>
<dbReference type="GO" id="GO:0001726">
    <property type="term" value="C:ruffle"/>
    <property type="evidence" value="ECO:0007669"/>
    <property type="project" value="UniProtKB-SubCell"/>
</dbReference>
<dbReference type="GO" id="GO:0001540">
    <property type="term" value="F:amyloid-beta binding"/>
    <property type="evidence" value="ECO:0000305"/>
    <property type="project" value="ARUK-UCL"/>
</dbReference>
<dbReference type="GO" id="GO:0042802">
    <property type="term" value="F:identical protein binding"/>
    <property type="evidence" value="ECO:0000353"/>
    <property type="project" value="IntAct"/>
</dbReference>
<dbReference type="GO" id="GO:0001530">
    <property type="term" value="F:lipopolysaccharide binding"/>
    <property type="evidence" value="ECO:0000315"/>
    <property type="project" value="BHF-UCL"/>
</dbReference>
<dbReference type="GO" id="GO:0001875">
    <property type="term" value="F:lipopolysaccharide immune receptor activity"/>
    <property type="evidence" value="ECO:0000314"/>
    <property type="project" value="UniProtKB"/>
</dbReference>
<dbReference type="GO" id="GO:0061809">
    <property type="term" value="F:NAD+ nucleosidase activity, cyclic ADP-ribose generating"/>
    <property type="evidence" value="ECO:0007669"/>
    <property type="project" value="UniProtKB-EC"/>
</dbReference>
<dbReference type="GO" id="GO:0046982">
    <property type="term" value="F:protein heterodimerization activity"/>
    <property type="evidence" value="ECO:0000353"/>
    <property type="project" value="ARUK-UCL"/>
</dbReference>
<dbReference type="GO" id="GO:0038023">
    <property type="term" value="F:signaling receptor activity"/>
    <property type="evidence" value="ECO:0000314"/>
    <property type="project" value="UniProt"/>
</dbReference>
<dbReference type="GO" id="GO:0005102">
    <property type="term" value="F:signaling receptor binding"/>
    <property type="evidence" value="ECO:0000353"/>
    <property type="project" value="ARUK-UCL"/>
</dbReference>
<dbReference type="GO" id="GO:0004888">
    <property type="term" value="F:transmembrane signaling receptor activity"/>
    <property type="evidence" value="ECO:0000314"/>
    <property type="project" value="UniProt"/>
</dbReference>
<dbReference type="GO" id="GO:0014002">
    <property type="term" value="P:astrocyte development"/>
    <property type="evidence" value="ECO:0007669"/>
    <property type="project" value="Ensembl"/>
</dbReference>
<dbReference type="GO" id="GO:0002322">
    <property type="term" value="P:B cell proliferation involved in immune response"/>
    <property type="evidence" value="ECO:0007669"/>
    <property type="project" value="Ensembl"/>
</dbReference>
<dbReference type="GO" id="GO:1904646">
    <property type="term" value="P:cellular response to amyloid-beta"/>
    <property type="evidence" value="ECO:0000314"/>
    <property type="project" value="ComplexPortal"/>
</dbReference>
<dbReference type="GO" id="GO:0071222">
    <property type="term" value="P:cellular response to lipopolysaccharide"/>
    <property type="evidence" value="ECO:0000314"/>
    <property type="project" value="UniProtKB"/>
</dbReference>
<dbReference type="GO" id="GO:0071223">
    <property type="term" value="P:cellular response to lipoteichoic acid"/>
    <property type="evidence" value="ECO:0007669"/>
    <property type="project" value="Ensembl"/>
</dbReference>
<dbReference type="GO" id="GO:0071260">
    <property type="term" value="P:cellular response to mechanical stimulus"/>
    <property type="evidence" value="ECO:0000270"/>
    <property type="project" value="UniProtKB"/>
</dbReference>
<dbReference type="GO" id="GO:0140052">
    <property type="term" value="P:cellular response to oxidised low-density lipoprotein particle stimulus"/>
    <property type="evidence" value="ECO:0000314"/>
    <property type="project" value="ComplexPortal"/>
</dbReference>
<dbReference type="GO" id="GO:0036120">
    <property type="term" value="P:cellular response to platelet-derived growth factor stimulus"/>
    <property type="evidence" value="ECO:0007669"/>
    <property type="project" value="Ensembl"/>
</dbReference>
<dbReference type="GO" id="GO:0071346">
    <property type="term" value="P:cellular response to type II interferon"/>
    <property type="evidence" value="ECO:0000314"/>
    <property type="project" value="UniProtKB"/>
</dbReference>
<dbReference type="GO" id="GO:0042742">
    <property type="term" value="P:defense response to bacterium"/>
    <property type="evidence" value="ECO:0000316"/>
    <property type="project" value="ARUK-UCL"/>
</dbReference>
<dbReference type="GO" id="GO:0050829">
    <property type="term" value="P:defense response to Gram-negative bacterium"/>
    <property type="evidence" value="ECO:0000318"/>
    <property type="project" value="GO_Central"/>
</dbReference>
<dbReference type="GO" id="GO:0016046">
    <property type="term" value="P:detection of fungus"/>
    <property type="evidence" value="ECO:0000303"/>
    <property type="project" value="UniProtKB"/>
</dbReference>
<dbReference type="GO" id="GO:0032497">
    <property type="term" value="P:detection of lipopolysaccharide"/>
    <property type="evidence" value="ECO:0000314"/>
    <property type="project" value="UniProtKB"/>
</dbReference>
<dbReference type="GO" id="GO:0070371">
    <property type="term" value="P:ERK1 and ERK2 cascade"/>
    <property type="evidence" value="ECO:0007669"/>
    <property type="project" value="Ensembl"/>
</dbReference>
<dbReference type="GO" id="GO:0010467">
    <property type="term" value="P:gene expression"/>
    <property type="evidence" value="ECO:0007669"/>
    <property type="project" value="Ensembl"/>
</dbReference>
<dbReference type="GO" id="GO:0006955">
    <property type="term" value="P:immune response"/>
    <property type="evidence" value="ECO:0000304"/>
    <property type="project" value="ProtInc"/>
</dbReference>
<dbReference type="GO" id="GO:0006954">
    <property type="term" value="P:inflammatory response"/>
    <property type="evidence" value="ECO:0000318"/>
    <property type="project" value="GO_Central"/>
</dbReference>
<dbReference type="GO" id="GO:0045087">
    <property type="term" value="P:innate immune response"/>
    <property type="evidence" value="ECO:0000304"/>
    <property type="project" value="BHF-UCL"/>
</dbReference>
<dbReference type="GO" id="GO:0060729">
    <property type="term" value="P:intestinal epithelial structure maintenance"/>
    <property type="evidence" value="ECO:0000250"/>
    <property type="project" value="BHF-UCL"/>
</dbReference>
<dbReference type="GO" id="GO:0007254">
    <property type="term" value="P:JNK cascade"/>
    <property type="evidence" value="ECO:0007669"/>
    <property type="project" value="Ensembl"/>
</dbReference>
<dbReference type="GO" id="GO:0031663">
    <property type="term" value="P:lipopolysaccharide-mediated signaling pathway"/>
    <property type="evidence" value="ECO:0000316"/>
    <property type="project" value="MGI"/>
</dbReference>
<dbReference type="GO" id="GO:0042116">
    <property type="term" value="P:macrophage activation"/>
    <property type="evidence" value="ECO:0000315"/>
    <property type="project" value="UniProtKB"/>
</dbReference>
<dbReference type="GO" id="GO:0045342">
    <property type="term" value="P:MHC class II biosynthetic process"/>
    <property type="evidence" value="ECO:0007669"/>
    <property type="project" value="Ensembl"/>
</dbReference>
<dbReference type="GO" id="GO:0014004">
    <property type="term" value="P:microglia differentiation"/>
    <property type="evidence" value="ECO:0007669"/>
    <property type="project" value="Ensembl"/>
</dbReference>
<dbReference type="GO" id="GO:0002755">
    <property type="term" value="P:MyD88-dependent toll-like receptor signaling pathway"/>
    <property type="evidence" value="ECO:0000314"/>
    <property type="project" value="UniProtKB"/>
</dbReference>
<dbReference type="GO" id="GO:0120163">
    <property type="term" value="P:negative regulation of cold-induced thermogenesis"/>
    <property type="evidence" value="ECO:0000250"/>
    <property type="project" value="YuBioLab"/>
</dbReference>
<dbReference type="GO" id="GO:0070373">
    <property type="term" value="P:negative regulation of ERK1 and ERK2 cascade"/>
    <property type="evidence" value="ECO:0000250"/>
    <property type="project" value="BHF-UCL"/>
</dbReference>
<dbReference type="GO" id="GO:0032700">
    <property type="term" value="P:negative regulation of interleukin-17 production"/>
    <property type="evidence" value="ECO:0000250"/>
    <property type="project" value="BHF-UCL"/>
</dbReference>
<dbReference type="GO" id="GO:0032707">
    <property type="term" value="P:negative regulation of interleukin-23 production"/>
    <property type="evidence" value="ECO:0000250"/>
    <property type="project" value="BHF-UCL"/>
</dbReference>
<dbReference type="GO" id="GO:0032715">
    <property type="term" value="P:negative regulation of interleukin-6 production"/>
    <property type="evidence" value="ECO:0000250"/>
    <property type="project" value="BHF-UCL"/>
</dbReference>
<dbReference type="GO" id="GO:0045671">
    <property type="term" value="P:negative regulation of osteoclast differentiation"/>
    <property type="evidence" value="ECO:0000303"/>
    <property type="project" value="UniProtKB"/>
</dbReference>
<dbReference type="GO" id="GO:0032720">
    <property type="term" value="P:negative regulation of tumor necrosis factor production"/>
    <property type="evidence" value="ECO:0000250"/>
    <property type="project" value="BHF-UCL"/>
</dbReference>
<dbReference type="GO" id="GO:0032689">
    <property type="term" value="P:negative regulation of type II interferon production"/>
    <property type="evidence" value="ECO:0000250"/>
    <property type="project" value="BHF-UCL"/>
</dbReference>
<dbReference type="GO" id="GO:0006809">
    <property type="term" value="P:nitric oxide biosynthetic process"/>
    <property type="evidence" value="ECO:0007669"/>
    <property type="project" value="Ensembl"/>
</dbReference>
<dbReference type="GO" id="GO:0002537">
    <property type="term" value="P:nitric oxide production involved in inflammatory response"/>
    <property type="evidence" value="ECO:0007669"/>
    <property type="project" value="Ensembl"/>
</dbReference>
<dbReference type="GO" id="GO:0070427">
    <property type="term" value="P:nucleotide-binding oligomerization domain containing 1 signaling pathway"/>
    <property type="evidence" value="ECO:0007669"/>
    <property type="project" value="Ensembl"/>
</dbReference>
<dbReference type="GO" id="GO:0070431">
    <property type="term" value="P:nucleotide-binding oligomerization domain containing 2 signaling pathway"/>
    <property type="evidence" value="ECO:0007669"/>
    <property type="project" value="Ensembl"/>
</dbReference>
<dbReference type="GO" id="GO:0006909">
    <property type="term" value="P:phagocytosis"/>
    <property type="evidence" value="ECO:0000314"/>
    <property type="project" value="UniProtKB"/>
</dbReference>
<dbReference type="GO" id="GO:0030890">
    <property type="term" value="P:positive regulation of B cell proliferation"/>
    <property type="evidence" value="ECO:0007669"/>
    <property type="project" value="Ensembl"/>
</dbReference>
<dbReference type="GO" id="GO:0043123">
    <property type="term" value="P:positive regulation of canonical NF-kappaB signal transduction"/>
    <property type="evidence" value="ECO:0000314"/>
    <property type="project" value="BHF-UCL"/>
</dbReference>
<dbReference type="GO" id="GO:1903974">
    <property type="term" value="P:positive regulation of cellular response to macrophage colony-stimulating factor stimulus"/>
    <property type="evidence" value="ECO:0000314"/>
    <property type="project" value="UniProtKB"/>
</dbReference>
<dbReference type="GO" id="GO:2000343">
    <property type="term" value="P:positive regulation of chemokine (C-X-C motif) ligand 2 production"/>
    <property type="evidence" value="ECO:0000315"/>
    <property type="project" value="ARUK-UCL"/>
</dbReference>
<dbReference type="GO" id="GO:0032722">
    <property type="term" value="P:positive regulation of chemokine production"/>
    <property type="evidence" value="ECO:0000314"/>
    <property type="project" value="BHF-UCL"/>
</dbReference>
<dbReference type="GO" id="GO:1900017">
    <property type="term" value="P:positive regulation of cytokine production involved in inflammatory response"/>
    <property type="evidence" value="ECO:0000314"/>
    <property type="project" value="UniProt"/>
</dbReference>
<dbReference type="GO" id="GO:0070374">
    <property type="term" value="P:positive regulation of ERK1 and ERK2 cascade"/>
    <property type="evidence" value="ECO:0007669"/>
    <property type="project" value="Ensembl"/>
</dbReference>
<dbReference type="GO" id="GO:2001238">
    <property type="term" value="P:positive regulation of extrinsic apoptotic signaling pathway"/>
    <property type="evidence" value="ECO:0000250"/>
    <property type="project" value="ARUK-UCL"/>
</dbReference>
<dbReference type="GO" id="GO:0010628">
    <property type="term" value="P:positive regulation of gene expression"/>
    <property type="evidence" value="ECO:0000315"/>
    <property type="project" value="UniProtKB"/>
</dbReference>
<dbReference type="GO" id="GO:0050729">
    <property type="term" value="P:positive regulation of inflammatory response"/>
    <property type="evidence" value="ECO:0000314"/>
    <property type="project" value="BHF-UCL"/>
</dbReference>
<dbReference type="GO" id="GO:0032727">
    <property type="term" value="P:positive regulation of interferon-alpha production"/>
    <property type="evidence" value="ECO:0000250"/>
    <property type="project" value="BHF-UCL"/>
</dbReference>
<dbReference type="GO" id="GO:0032728">
    <property type="term" value="P:positive regulation of interferon-beta production"/>
    <property type="evidence" value="ECO:0000250"/>
    <property type="project" value="BHF-UCL"/>
</dbReference>
<dbReference type="GO" id="GO:0032731">
    <property type="term" value="P:positive regulation of interleukin-1 beta production"/>
    <property type="evidence" value="ECO:0000314"/>
    <property type="project" value="UniProtKB"/>
</dbReference>
<dbReference type="GO" id="GO:0032732">
    <property type="term" value="P:positive regulation of interleukin-1 production"/>
    <property type="evidence" value="ECO:0000250"/>
    <property type="project" value="BHF-UCL"/>
</dbReference>
<dbReference type="GO" id="GO:0032733">
    <property type="term" value="P:positive regulation of interleukin-10 production"/>
    <property type="evidence" value="ECO:0000250"/>
    <property type="project" value="BHF-UCL"/>
</dbReference>
<dbReference type="GO" id="GO:0032735">
    <property type="term" value="P:positive regulation of interleukin-12 production"/>
    <property type="evidence" value="ECO:0000314"/>
    <property type="project" value="UniProtKB"/>
</dbReference>
<dbReference type="GO" id="GO:0032755">
    <property type="term" value="P:positive regulation of interleukin-6 production"/>
    <property type="evidence" value="ECO:0000314"/>
    <property type="project" value="BHF-UCL"/>
</dbReference>
<dbReference type="GO" id="GO:0032757">
    <property type="term" value="P:positive regulation of interleukin-8 production"/>
    <property type="evidence" value="ECO:0000314"/>
    <property type="project" value="UniProtKB"/>
</dbReference>
<dbReference type="GO" id="GO:0046330">
    <property type="term" value="P:positive regulation of JNK cascade"/>
    <property type="evidence" value="ECO:0007669"/>
    <property type="project" value="Ensembl"/>
</dbReference>
<dbReference type="GO" id="GO:0043032">
    <property type="term" value="P:positive regulation of macrophage activation"/>
    <property type="evidence" value="ECO:0000250"/>
    <property type="project" value="ARUK-UCL"/>
</dbReference>
<dbReference type="GO" id="GO:0060907">
    <property type="term" value="P:positive regulation of macrophage cytokine production"/>
    <property type="evidence" value="ECO:0007669"/>
    <property type="project" value="Ensembl"/>
</dbReference>
<dbReference type="GO" id="GO:1904466">
    <property type="term" value="P:positive regulation of matrix metallopeptidase secretion"/>
    <property type="evidence" value="ECO:0000315"/>
    <property type="project" value="ARUK-UCL"/>
</dbReference>
<dbReference type="GO" id="GO:0045348">
    <property type="term" value="P:positive regulation of MHC class II biosynthetic process"/>
    <property type="evidence" value="ECO:0007669"/>
    <property type="project" value="Ensembl"/>
</dbReference>
<dbReference type="GO" id="GO:0051092">
    <property type="term" value="P:positive regulation of NF-kappaB transcription factor activity"/>
    <property type="evidence" value="ECO:0000314"/>
    <property type="project" value="UniProtKB"/>
</dbReference>
<dbReference type="GO" id="GO:0045429">
    <property type="term" value="P:positive regulation of nitric oxide biosynthetic process"/>
    <property type="evidence" value="ECO:0000250"/>
    <property type="project" value="ARUK-UCL"/>
</dbReference>
<dbReference type="GO" id="GO:1900227">
    <property type="term" value="P:positive regulation of NLRP3 inflammasome complex assembly"/>
    <property type="evidence" value="ECO:0000250"/>
    <property type="project" value="UniProtKB"/>
</dbReference>
<dbReference type="GO" id="GO:0070430">
    <property type="term" value="P:positive regulation of nucleotide-binding oligomerization domain containing 1 signaling pathway"/>
    <property type="evidence" value="ECO:0007669"/>
    <property type="project" value="Ensembl"/>
</dbReference>
<dbReference type="GO" id="GO:0070434">
    <property type="term" value="P:positive regulation of nucleotide-binding oligomerization domain containing 2 signaling pathway"/>
    <property type="evidence" value="ECO:0007669"/>
    <property type="project" value="Ensembl"/>
</dbReference>
<dbReference type="GO" id="GO:0010572">
    <property type="term" value="P:positive regulation of platelet activation"/>
    <property type="evidence" value="ECO:0000250"/>
    <property type="project" value="BHF-UCL"/>
</dbReference>
<dbReference type="GO" id="GO:1903428">
    <property type="term" value="P:positive regulation of reactive oxygen species biosynthetic process"/>
    <property type="evidence" value="ECO:0000250"/>
    <property type="project" value="ARUK-UCL"/>
</dbReference>
<dbReference type="GO" id="GO:0014911">
    <property type="term" value="P:positive regulation of smooth muscle cell migration"/>
    <property type="evidence" value="ECO:0007669"/>
    <property type="project" value="Ensembl"/>
</dbReference>
<dbReference type="GO" id="GO:0048661">
    <property type="term" value="P:positive regulation of smooth muscle cell proliferation"/>
    <property type="evidence" value="ECO:0007669"/>
    <property type="project" value="Ensembl"/>
</dbReference>
<dbReference type="GO" id="GO:0032874">
    <property type="term" value="P:positive regulation of stress-activated MAPK cascade"/>
    <property type="evidence" value="ECO:0007669"/>
    <property type="project" value="Ensembl"/>
</dbReference>
<dbReference type="GO" id="GO:0045944">
    <property type="term" value="P:positive regulation of transcription by RNA polymerase II"/>
    <property type="evidence" value="ECO:0000250"/>
    <property type="project" value="BHF-UCL"/>
</dbReference>
<dbReference type="GO" id="GO:0032760">
    <property type="term" value="P:positive regulation of tumor necrosis factor production"/>
    <property type="evidence" value="ECO:0000314"/>
    <property type="project" value="UniProtKB"/>
</dbReference>
<dbReference type="GO" id="GO:0032729">
    <property type="term" value="P:positive regulation of type II interferon production"/>
    <property type="evidence" value="ECO:0000250"/>
    <property type="project" value="BHF-UCL"/>
</dbReference>
<dbReference type="GO" id="GO:0002730">
    <property type="term" value="P:regulation of dendritic cell cytokine production"/>
    <property type="evidence" value="ECO:0007669"/>
    <property type="project" value="Ensembl"/>
</dbReference>
<dbReference type="GO" id="GO:0032496">
    <property type="term" value="P:response to lipopolysaccharide"/>
    <property type="evidence" value="ECO:0000314"/>
    <property type="project" value="MGI"/>
</dbReference>
<dbReference type="GO" id="GO:0051403">
    <property type="term" value="P:stress-activated MAPK cascade"/>
    <property type="evidence" value="ECO:0007669"/>
    <property type="project" value="Ensembl"/>
</dbReference>
<dbReference type="GO" id="GO:0042088">
    <property type="term" value="P:T-helper 1 type immune response"/>
    <property type="evidence" value="ECO:0000303"/>
    <property type="project" value="UniProtKB"/>
</dbReference>
<dbReference type="GO" id="GO:0034142">
    <property type="term" value="P:toll-like receptor 4 signaling pathway"/>
    <property type="evidence" value="ECO:0000314"/>
    <property type="project" value="UniProt"/>
</dbReference>
<dbReference type="GO" id="GO:0002224">
    <property type="term" value="P:toll-like receptor signaling pathway"/>
    <property type="evidence" value="ECO:0000314"/>
    <property type="project" value="ComplexPortal"/>
</dbReference>
<dbReference type="GO" id="GO:0035666">
    <property type="term" value="P:TRIF-dependent toll-like receptor signaling pathway"/>
    <property type="evidence" value="ECO:0000250"/>
    <property type="project" value="ARUK-UCL"/>
</dbReference>
<dbReference type="GO" id="GO:0002246">
    <property type="term" value="P:wound healing involved in inflammatory response"/>
    <property type="evidence" value="ECO:0007669"/>
    <property type="project" value="Ensembl"/>
</dbReference>
<dbReference type="FunFam" id="3.40.50.10140:FF:000006">
    <property type="entry name" value="Toll-like receptor 4"/>
    <property type="match status" value="1"/>
</dbReference>
<dbReference type="FunFam" id="3.80.10.10:FF:000195">
    <property type="entry name" value="Toll-like receptor 4"/>
    <property type="match status" value="1"/>
</dbReference>
<dbReference type="Gene3D" id="3.80.10.10">
    <property type="entry name" value="Ribonuclease Inhibitor"/>
    <property type="match status" value="1"/>
</dbReference>
<dbReference type="Gene3D" id="3.40.50.10140">
    <property type="entry name" value="Toll/interleukin-1 receptor homology (TIR) domain"/>
    <property type="match status" value="1"/>
</dbReference>
<dbReference type="InterPro" id="IPR000483">
    <property type="entry name" value="Cys-rich_flank_reg_C"/>
</dbReference>
<dbReference type="InterPro" id="IPR001611">
    <property type="entry name" value="Leu-rich_rpt"/>
</dbReference>
<dbReference type="InterPro" id="IPR025875">
    <property type="entry name" value="Leu-rich_rpt_4"/>
</dbReference>
<dbReference type="InterPro" id="IPR003591">
    <property type="entry name" value="Leu-rich_rpt_typical-subtyp"/>
</dbReference>
<dbReference type="InterPro" id="IPR032675">
    <property type="entry name" value="LRR_dom_sf"/>
</dbReference>
<dbReference type="InterPro" id="IPR000157">
    <property type="entry name" value="TIR_dom"/>
</dbReference>
<dbReference type="InterPro" id="IPR017241">
    <property type="entry name" value="Toll-like_receptor"/>
</dbReference>
<dbReference type="InterPro" id="IPR035897">
    <property type="entry name" value="Toll_tir_struct_dom_sf"/>
</dbReference>
<dbReference type="PANTHER" id="PTHR24365">
    <property type="entry name" value="TOLL-LIKE RECEPTOR"/>
    <property type="match status" value="1"/>
</dbReference>
<dbReference type="PANTHER" id="PTHR24365:SF521">
    <property type="entry name" value="TOLL-LIKE RECEPTOR 4"/>
    <property type="match status" value="1"/>
</dbReference>
<dbReference type="Pfam" id="PF12799">
    <property type="entry name" value="LRR_4"/>
    <property type="match status" value="1"/>
</dbReference>
<dbReference type="Pfam" id="PF13516">
    <property type="entry name" value="LRR_6"/>
    <property type="match status" value="1"/>
</dbReference>
<dbReference type="Pfam" id="PF13855">
    <property type="entry name" value="LRR_8"/>
    <property type="match status" value="2"/>
</dbReference>
<dbReference type="Pfam" id="PF01582">
    <property type="entry name" value="TIR"/>
    <property type="match status" value="1"/>
</dbReference>
<dbReference type="PIRSF" id="PIRSF037595">
    <property type="entry name" value="Toll-like_receptor"/>
    <property type="match status" value="1"/>
</dbReference>
<dbReference type="PRINTS" id="PR00019">
    <property type="entry name" value="LEURICHRPT"/>
</dbReference>
<dbReference type="SMART" id="SM00365">
    <property type="entry name" value="LRR_SD22"/>
    <property type="match status" value="5"/>
</dbReference>
<dbReference type="SMART" id="SM00369">
    <property type="entry name" value="LRR_TYP"/>
    <property type="match status" value="11"/>
</dbReference>
<dbReference type="SMART" id="SM00082">
    <property type="entry name" value="LRRCT"/>
    <property type="match status" value="1"/>
</dbReference>
<dbReference type="SMART" id="SM00255">
    <property type="entry name" value="TIR"/>
    <property type="match status" value="1"/>
</dbReference>
<dbReference type="SUPFAM" id="SSF52075">
    <property type="entry name" value="Outer arm dynein light chain 1"/>
    <property type="match status" value="1"/>
</dbReference>
<dbReference type="SUPFAM" id="SSF52047">
    <property type="entry name" value="RNI-like"/>
    <property type="match status" value="1"/>
</dbReference>
<dbReference type="SUPFAM" id="SSF52200">
    <property type="entry name" value="Toll/Interleukin receptor TIR domain"/>
    <property type="match status" value="1"/>
</dbReference>
<dbReference type="PROSITE" id="PS51450">
    <property type="entry name" value="LRR"/>
    <property type="match status" value="11"/>
</dbReference>
<dbReference type="PROSITE" id="PS50104">
    <property type="entry name" value="TIR"/>
    <property type="match status" value="1"/>
</dbReference>
<feature type="signal peptide" evidence="13">
    <location>
        <begin position="1"/>
        <end position="23"/>
    </location>
</feature>
<feature type="chain" id="PRO_0000034722" description="Toll-like receptor 4">
    <location>
        <begin position="24"/>
        <end position="839"/>
    </location>
</feature>
<feature type="topological domain" description="Extracellular" evidence="2">
    <location>
        <begin position="24"/>
        <end position="631"/>
    </location>
</feature>
<feature type="transmembrane region" description="Helical" evidence="2">
    <location>
        <begin position="632"/>
        <end position="652"/>
    </location>
</feature>
<feature type="topological domain" description="Cytoplasmic" evidence="2">
    <location>
        <begin position="653"/>
        <end position="839"/>
    </location>
</feature>
<feature type="repeat" description="LRR 1">
    <location>
        <begin position="55"/>
        <end position="76"/>
    </location>
</feature>
<feature type="repeat" description="LRR 2">
    <location>
        <begin position="79"/>
        <end position="100"/>
    </location>
</feature>
<feature type="repeat" description="LRR 3">
    <location>
        <begin position="103"/>
        <end position="124"/>
    </location>
</feature>
<feature type="repeat" description="LRR 4">
    <location>
        <begin position="127"/>
        <end position="148"/>
    </location>
</feature>
<feature type="repeat" description="LRR 5">
    <location>
        <begin position="151"/>
        <end position="172"/>
    </location>
</feature>
<feature type="repeat" description="LRR 6">
    <location>
        <begin position="176"/>
        <end position="199"/>
    </location>
</feature>
<feature type="repeat" description="LRR 7">
    <location>
        <begin position="205"/>
        <end position="225"/>
    </location>
</feature>
<feature type="repeat" description="LRR 8">
    <location>
        <begin position="227"/>
        <end position="247"/>
    </location>
</feature>
<feature type="repeat" description="LRR 9">
    <location>
        <begin position="331"/>
        <end position="351"/>
    </location>
</feature>
<feature type="repeat" description="LRR 10">
    <location>
        <begin position="352"/>
        <end position="373"/>
    </location>
</feature>
<feature type="repeat" description="LRR 11">
    <location>
        <begin position="374"/>
        <end position="394"/>
    </location>
</feature>
<feature type="repeat" description="LRR 12">
    <location>
        <begin position="400"/>
        <end position="422"/>
    </location>
</feature>
<feature type="repeat" description="LRR 13">
    <location>
        <begin position="423"/>
        <end position="444"/>
    </location>
</feature>
<feature type="repeat" description="LRR 14">
    <location>
        <begin position="448"/>
        <end position="456"/>
    </location>
</feature>
<feature type="repeat" description="LRR 15">
    <location>
        <begin position="472"/>
        <end position="495"/>
    </location>
</feature>
<feature type="repeat" description="LRR 16">
    <location>
        <begin position="497"/>
        <end position="518"/>
    </location>
</feature>
<feature type="repeat" description="LRR 17">
    <location>
        <begin position="521"/>
        <end position="542"/>
    </location>
</feature>
<feature type="repeat" description="LRR 18">
    <location>
        <begin position="545"/>
        <end position="565"/>
    </location>
</feature>
<feature type="domain" description="LRRCT">
    <location>
        <begin position="579"/>
        <end position="629"/>
    </location>
</feature>
<feature type="domain" description="TIR" evidence="3">
    <location>
        <begin position="672"/>
        <end position="815"/>
    </location>
</feature>
<feature type="glycosylation site" description="N-linked (GlcNAc...) asparagine" evidence="9 21 30">
    <location>
        <position position="35"/>
    </location>
</feature>
<feature type="glycosylation site" description="N-linked (GlcNAc...) asparagine" evidence="9 21 22 30">
    <location>
        <position position="173"/>
    </location>
</feature>
<feature type="glycosylation site" description="N-linked (GlcNAc...) asparagine" evidence="9 21 22">
    <location>
        <position position="205"/>
    </location>
</feature>
<feature type="glycosylation site" description="N-linked (GlcNAc...) asparagine" evidence="9">
    <location>
        <position position="282"/>
    </location>
</feature>
<feature type="glycosylation site" description="N-linked (GlcNAc...) asparagine" evidence="9">
    <location>
        <position position="309"/>
    </location>
</feature>
<feature type="glycosylation site" description="N-linked (GlcNAc...) asparagine" evidence="9 22">
    <location>
        <position position="497"/>
    </location>
</feature>
<feature type="glycosylation site" description="N-linked (GlcNAc...) asparagine" evidence="9 22 44">
    <location>
        <position position="526"/>
    </location>
</feature>
<feature type="glycosylation site" description="N-linked (GlcNAc...) asparagine" evidence="9 22 44">
    <location>
        <position position="575"/>
    </location>
</feature>
<feature type="glycosylation site" description="N-linked (GlcNAc...) asparagine" evidence="9">
    <location>
        <position position="624"/>
    </location>
</feature>
<feature type="glycosylation site" description="N-linked (GlcNAc...) asparagine" evidence="2">
    <location>
        <position position="630"/>
    </location>
</feature>
<feature type="disulfide bond" evidence="21 22">
    <location>
        <begin position="29"/>
        <end position="40"/>
    </location>
</feature>
<feature type="disulfide bond" evidence="22">
    <location>
        <begin position="281"/>
        <end position="306"/>
    </location>
</feature>
<feature type="disulfide bond" evidence="22">
    <location>
        <begin position="390"/>
        <end position="391"/>
    </location>
</feature>
<feature type="disulfide bond" evidence="22">
    <location>
        <begin position="583"/>
        <end position="609"/>
    </location>
</feature>
<feature type="disulfide bond" evidence="22">
    <location>
        <begin position="585"/>
        <end position="627"/>
    </location>
</feature>
<feature type="splice variant" id="VSP_035793" description="In isoform 3." evidence="47">
    <location>
        <begin position="1"/>
        <end position="200"/>
    </location>
</feature>
<feature type="splice variant" id="VSP_035794" description="In isoform 2." evidence="47 48">
    <location>
        <begin position="1"/>
        <end position="40"/>
    </location>
</feature>
<feature type="sequence variant" id="VAR_021977" description="In dbSNP:rs16906079.">
    <original>T</original>
    <variation>A</variation>
    <location>
        <position position="175"/>
    </location>
</feature>
<feature type="sequence variant" id="VAR_018729" description="In dbSNP:rs5030713." evidence="8">
    <original>Q</original>
    <variation>R</variation>
    <location>
        <position position="188"/>
    </location>
</feature>
<feature type="sequence variant" id="VAR_018730" description="In dbSNP:rs5030714." evidence="8">
    <original>C</original>
    <variation>S</variation>
    <location>
        <position position="246"/>
    </location>
</feature>
<feature type="sequence variant" id="VAR_074187" evidence="35">
    <original>E</original>
    <variation>D</variation>
    <location>
        <position position="287"/>
    </location>
</feature>
<feature type="sequence variant" id="VAR_012739" description="In allele TLR4*B; reduced LPS-response; associated with an increased risk for age-related macular degeneration in Caucasian carriers; dbSNP:rs4986790." evidence="4 6 8 16 24">
    <original>D</original>
    <variation>G</variation>
    <location>
        <position position="299"/>
    </location>
</feature>
<feature type="sequence variant" id="VAR_047563" description="In dbSNP:rs2770145.">
    <original>C</original>
    <variation>W</variation>
    <location>
        <position position="306"/>
    </location>
</feature>
<feature type="sequence variant" id="VAR_047564" description="In dbSNP:rs2770144.">
    <original>V</original>
    <variation>G</variation>
    <location>
        <position position="310"/>
    </location>
</feature>
<feature type="sequence variant" id="VAR_018731" description="In dbSNP:rs5030715." evidence="8">
    <original>N</original>
    <variation>S</variation>
    <location>
        <position position="329"/>
    </location>
</feature>
<feature type="sequence variant" id="VAR_020334" description="In dbSNP:rs5031050.">
    <original>F</original>
    <variation>Y</variation>
    <location>
        <position position="342"/>
    </location>
</feature>
<feature type="sequence variant" id="VAR_037668" description="In dbSNP:rs11536884.">
    <original>L</original>
    <variation>F</variation>
    <location>
        <position position="385"/>
    </location>
</feature>
<feature type="sequence variant" id="VAR_012740" description="In allele TLR4*B; reduced LPS-response; dbSNP:rs4986791." evidence="4 6 8 24">
    <original>T</original>
    <variation>I</variation>
    <location>
        <position position="399"/>
    </location>
</feature>
<feature type="sequence variant" id="VAR_020335" description="In dbSNP:rs4987233.">
    <original>S</original>
    <variation>N</variation>
    <location>
        <position position="400"/>
    </location>
</feature>
<feature type="sequence variant" id="VAR_018732" description="In dbSNP:rs5030716." evidence="8">
    <original>F</original>
    <variation>L</variation>
    <location>
        <position position="443"/>
    </location>
</feature>
<feature type="sequence variant" id="VAR_018733" description="In dbSNP:rs5030718." evidence="8">
    <original>E</original>
    <variation>K</variation>
    <location>
        <position position="474"/>
    </location>
</feature>
<feature type="sequence variant" id="VAR_018734" description="In dbSNP:rs5030719." evidence="8">
    <original>Q</original>
    <variation>H</variation>
    <location>
        <position position="510"/>
    </location>
</feature>
<feature type="sequence variant" id="VAR_018735" description="In dbSNP:rs5030722." evidence="8">
    <original>K</original>
    <variation>R</variation>
    <location>
        <position position="694"/>
    </location>
</feature>
<feature type="sequence variant" id="VAR_018736" description="In dbSNP:rs5030723." evidence="8">
    <original>R</original>
    <variation>H</variation>
    <location>
        <position position="763"/>
    </location>
</feature>
<feature type="sequence variant" id="VAR_018737" evidence="8">
    <original>Q</original>
    <variation>H</variation>
    <location>
        <position position="834"/>
    </location>
</feature>
<feature type="mutagenesis site" description="Partially diminishes NF-kappa-B activation induced by Ni(2+). Strongly reduces NF-kappa-B activation induced by Ni(2+); when associated with A-456 or A-458." evidence="26">
    <original>H</original>
    <variation>A</variation>
    <location>
        <position position="431"/>
    </location>
</feature>
<feature type="mutagenesis site" description="Partially diminishes NF-kappa-B activation induced by Ni(2+). Strongly reduces NF-kappa-B activation induced by Ni(2+); when associated with A-431. Suppresses NF-kappa-B activation induced by Ni(2+); when associated with A-458." evidence="26">
    <original>H</original>
    <variation>A</variation>
    <location>
        <position position="456"/>
    </location>
</feature>
<feature type="mutagenesis site" description="Partially diminishes NF-kappa-B activation induced by Ni(2+). Strongly reduces NF-kappa-B activation induced by Ni(2+); when associated with A-431. Suppresses NF-kappa-B activation induced by Ni(2+); when associated with A-456." evidence="26">
    <original>H</original>
    <variation>A</variation>
    <location>
        <position position="458"/>
    </location>
</feature>
<feature type="mutagenesis site" description="Abolishes LPS-response and prevents the cell surface expression." evidence="9">
    <original>N</original>
    <variation>A</variation>
    <location>
        <position position="526"/>
    </location>
</feature>
<feature type="mutagenesis site" description="Abolishes LPS-response and prevents the cell surface expression." evidence="9">
    <original>N</original>
    <variation>A</variation>
    <location>
        <position position="575"/>
    </location>
</feature>
<feature type="mutagenesis site" description="Abolishes LPS-response." evidence="5">
    <original>E</original>
    <variation>R</variation>
    <location>
        <position position="697"/>
    </location>
</feature>
<feature type="mutagenesis site" description="Abolishes LPS-response." evidence="5">
    <original>R</original>
    <variation>E</variation>
    <location>
        <position position="710"/>
    </location>
</feature>
<feature type="mutagenesis site" description="Abolishes LPS-response." evidence="5">
    <original>D</original>
    <variation>K</variation>
    <location>
        <position position="711"/>
    </location>
</feature>
<feature type="mutagenesis site" description="Abolishes MYD88-binding and LPS-response." evidence="5">
    <original>P</original>
    <variation>H</variation>
    <variation>R</variation>
    <variation>E</variation>
    <location>
        <position position="714"/>
    </location>
</feature>
<feature type="sequence conflict" description="In Ref. 11; ABU41664." evidence="49" ref="11">
    <original>S</original>
    <variation>R</variation>
    <location>
        <position position="73"/>
    </location>
</feature>
<feature type="sequence conflict" description="In Ref. 7; BAF82742." evidence="49" ref="7">
    <original>S</original>
    <variation>C</variation>
    <location>
        <position position="400"/>
    </location>
</feature>
<feature type="sequence conflict" description="In Ref. 7; BAG64706." evidence="49" ref="7">
    <original>F</original>
    <variation>S</variation>
    <location>
        <position position="581"/>
    </location>
</feature>
<feature type="strand" evidence="51">
    <location>
        <begin position="29"/>
        <end position="33"/>
    </location>
</feature>
<feature type="turn" evidence="51">
    <location>
        <begin position="34"/>
        <end position="36"/>
    </location>
</feature>
<feature type="strand" evidence="51">
    <location>
        <begin position="37"/>
        <end position="39"/>
    </location>
</feature>
<feature type="strand" evidence="51">
    <location>
        <begin position="50"/>
        <end position="52"/>
    </location>
</feature>
<feature type="strand" evidence="51">
    <location>
        <begin position="58"/>
        <end position="60"/>
    </location>
</feature>
<feature type="turn" evidence="51">
    <location>
        <begin position="71"/>
        <end position="76"/>
    </location>
</feature>
<feature type="strand" evidence="51">
    <location>
        <begin position="81"/>
        <end position="84"/>
    </location>
</feature>
<feature type="turn" evidence="51">
    <location>
        <begin position="95"/>
        <end position="100"/>
    </location>
</feature>
<feature type="strand" evidence="51">
    <location>
        <begin position="106"/>
        <end position="108"/>
    </location>
</feature>
<feature type="strand" evidence="56">
    <location>
        <begin position="115"/>
        <end position="117"/>
    </location>
</feature>
<feature type="turn" evidence="51">
    <location>
        <begin position="119"/>
        <end position="124"/>
    </location>
</feature>
<feature type="strand" evidence="51">
    <location>
        <begin position="130"/>
        <end position="132"/>
    </location>
</feature>
<feature type="helix" evidence="55">
    <location>
        <begin position="141"/>
        <end position="143"/>
    </location>
</feature>
<feature type="turn" evidence="54">
    <location>
        <begin position="145"/>
        <end position="148"/>
    </location>
</feature>
<feature type="strand" evidence="51">
    <location>
        <begin position="154"/>
        <end position="156"/>
    </location>
</feature>
<feature type="helix" evidence="51">
    <location>
        <begin position="169"/>
        <end position="173"/>
    </location>
</feature>
<feature type="strand" evidence="51">
    <location>
        <begin position="179"/>
        <end position="181"/>
    </location>
</feature>
<feature type="helix" evidence="51">
    <location>
        <begin position="192"/>
        <end position="195"/>
    </location>
</feature>
<feature type="helix" evidence="51">
    <location>
        <begin position="196"/>
        <end position="199"/>
    </location>
</feature>
<feature type="strand" evidence="51">
    <location>
        <begin position="206"/>
        <end position="209"/>
    </location>
</feature>
<feature type="turn" evidence="52">
    <location>
        <begin position="220"/>
        <end position="225"/>
    </location>
</feature>
<feature type="strand" evidence="52">
    <location>
        <begin position="227"/>
        <end position="235"/>
    </location>
</feature>
<feature type="helix" evidence="52">
    <location>
        <begin position="242"/>
        <end position="248"/>
    </location>
</feature>
<feature type="turn" evidence="52">
    <location>
        <begin position="249"/>
        <end position="252"/>
    </location>
</feature>
<feature type="strand" evidence="52">
    <location>
        <begin position="254"/>
        <end position="262"/>
    </location>
</feature>
<feature type="turn" evidence="52">
    <location>
        <begin position="274"/>
        <end position="277"/>
    </location>
</feature>
<feature type="helix" evidence="52">
    <location>
        <begin position="278"/>
        <end position="282"/>
    </location>
</feature>
<feature type="strand" evidence="52">
    <location>
        <begin position="283"/>
        <end position="292"/>
    </location>
</feature>
<feature type="strand" evidence="52">
    <location>
        <begin position="295"/>
        <end position="298"/>
    </location>
</feature>
<feature type="turn" evidence="52">
    <location>
        <begin position="301"/>
        <end position="304"/>
    </location>
</feature>
<feature type="helix" evidence="52">
    <location>
        <begin position="305"/>
        <end position="307"/>
    </location>
</feature>
<feature type="strand" evidence="52">
    <location>
        <begin position="311"/>
        <end position="317"/>
    </location>
</feature>
<feature type="strand" evidence="57">
    <location>
        <begin position="319"/>
        <end position="322"/>
    </location>
</feature>
<feature type="helix" evidence="57">
    <location>
        <begin position="324"/>
        <end position="327"/>
    </location>
</feature>
<feature type="strand" evidence="52">
    <location>
        <begin position="333"/>
        <end position="339"/>
    </location>
</feature>
<feature type="strand" evidence="57">
    <location>
        <begin position="341"/>
        <end position="344"/>
    </location>
</feature>
<feature type="strand" evidence="52">
    <location>
        <begin position="355"/>
        <end position="360"/>
    </location>
</feature>
<feature type="strand" evidence="52">
    <location>
        <begin position="377"/>
        <end position="379"/>
    </location>
</feature>
<feature type="strand" evidence="53">
    <location>
        <begin position="387"/>
        <end position="392"/>
    </location>
</feature>
<feature type="helix" evidence="53">
    <location>
        <begin position="393"/>
        <end position="396"/>
    </location>
</feature>
<feature type="strand" evidence="53">
    <location>
        <begin position="403"/>
        <end position="405"/>
    </location>
</feature>
<feature type="strand" evidence="53">
    <location>
        <begin position="410"/>
        <end position="419"/>
    </location>
</feature>
<feature type="strand" evidence="53">
    <location>
        <begin position="426"/>
        <end position="428"/>
    </location>
</feature>
<feature type="strand" evidence="53">
    <location>
        <begin position="432"/>
        <end position="437"/>
    </location>
</feature>
<feature type="turn" evidence="53">
    <location>
        <begin position="438"/>
        <end position="445"/>
    </location>
</feature>
<feature type="strand" evidence="53">
    <location>
        <begin position="451"/>
        <end position="453"/>
    </location>
</feature>
<feature type="turn" evidence="53">
    <location>
        <begin position="464"/>
        <end position="469"/>
    </location>
</feature>
<feature type="strand" evidence="53">
    <location>
        <begin position="475"/>
        <end position="477"/>
    </location>
</feature>
<feature type="helix" evidence="53">
    <location>
        <begin position="484"/>
        <end position="486"/>
    </location>
</feature>
<feature type="strand" evidence="53">
    <location>
        <begin position="500"/>
        <end position="502"/>
    </location>
</feature>
<feature type="turn" evidence="53">
    <location>
        <begin position="513"/>
        <end position="518"/>
    </location>
</feature>
<feature type="strand" evidence="53">
    <location>
        <begin position="524"/>
        <end position="526"/>
    </location>
</feature>
<feature type="helix" evidence="53">
    <location>
        <begin position="538"/>
        <end position="540"/>
    </location>
</feature>
<feature type="strand" evidence="53">
    <location>
        <begin position="548"/>
        <end position="550"/>
    </location>
</feature>
<feature type="strand" evidence="53">
    <location>
        <begin position="560"/>
        <end position="563"/>
    </location>
</feature>
<feature type="strand" evidence="53">
    <location>
        <begin position="573"/>
        <end position="575"/>
    </location>
</feature>
<feature type="helix" evidence="53">
    <location>
        <begin position="585"/>
        <end position="587"/>
    </location>
</feature>
<feature type="helix" evidence="53">
    <location>
        <begin position="588"/>
        <end position="596"/>
    </location>
</feature>
<feature type="helix" evidence="53">
    <location>
        <begin position="597"/>
        <end position="600"/>
    </location>
</feature>
<feature type="helix" evidence="53">
    <location>
        <begin position="604"/>
        <end position="606"/>
    </location>
</feature>
<feature type="strand" evidence="53">
    <location>
        <begin position="608"/>
        <end position="612"/>
    </location>
</feature>
<feature type="helix" evidence="53">
    <location>
        <begin position="613"/>
        <end position="615"/>
    </location>
</feature>
<feature type="strand" evidence="59">
    <location>
        <begin position="617"/>
        <end position="619"/>
    </location>
</feature>
<feature type="helix" evidence="53">
    <location>
        <begin position="620"/>
        <end position="622"/>
    </location>
</feature>
<feature type="strand" evidence="58">
    <location>
        <begin position="627"/>
        <end position="629"/>
    </location>
</feature>
<feature type="helix" evidence="58">
    <location>
        <begin position="630"/>
        <end position="662"/>
    </location>
</feature>
<gene>
    <name type="primary">TLR4</name>
</gene>
<keyword id="KW-0002">3D-structure</keyword>
<keyword id="KW-0913">Age-related macular degeneration</keyword>
<keyword id="KW-0025">Alternative splicing</keyword>
<keyword id="KW-1003">Cell membrane</keyword>
<keyword id="KW-0966">Cell projection</keyword>
<keyword id="KW-0903">Direct protein sequencing</keyword>
<keyword id="KW-1015">Disulfide bond</keyword>
<keyword id="KW-0967">Endosome</keyword>
<keyword id="KW-0325">Glycoprotein</keyword>
<keyword id="KW-0391">Immunity</keyword>
<keyword id="KW-0395">Inflammatory response</keyword>
<keyword id="KW-0399">Innate immunity</keyword>
<keyword id="KW-0433">Leucine-rich repeat</keyword>
<keyword id="KW-0472">Membrane</keyword>
<keyword id="KW-0520">NAD</keyword>
<keyword id="KW-1267">Proteomics identification</keyword>
<keyword id="KW-0675">Receptor</keyword>
<keyword id="KW-1185">Reference proteome</keyword>
<keyword id="KW-0677">Repeat</keyword>
<keyword id="KW-0732">Signal</keyword>
<keyword id="KW-0812">Transmembrane</keyword>
<keyword id="KW-1133">Transmembrane helix</keyword>
<keyword id="KW-0832">Ubl conjugation</keyword>
<name>TLR4_HUMAN</name>
<proteinExistence type="evidence at protein level"/>
<reference key="1">
    <citation type="journal article" date="1997" name="Nature">
        <title>A human homologue of the Drosophila Toll protein signals activation of adaptive immunity.</title>
        <authorList>
            <person name="Medzhitov R."/>
            <person name="Preston-Hurlburt P."/>
            <person name="Janeway C.A. Jr."/>
        </authorList>
    </citation>
    <scope>NUCLEOTIDE SEQUENCE [MRNA] (ISOFORM 1)</scope>
    <scope>FUNCTION</scope>
    <scope>SUBCELLULAR LOCATION</scope>
    <scope>TISSUE SPECIFICITY</scope>
    <source>
        <tissue>Spleen</tissue>
    </source>
</reference>
<reference key="2">
    <citation type="journal article" date="1998" name="Proc. Natl. Acad. Sci. U.S.A.">
        <title>A family of human receptors structurally related to Drosophila Toll.</title>
        <authorList>
            <person name="Rock F.L."/>
            <person name="Hardiman G."/>
            <person name="Timans J.C."/>
            <person name="Kastelein R.A."/>
            <person name="Bazan J.F."/>
        </authorList>
    </citation>
    <scope>NUCLEOTIDE SEQUENCE [MRNA] (ISOFORM 2)</scope>
    <scope>TISSUE SPECIFICITY</scope>
    <source>
        <tissue>Fetal liver</tissue>
        <tissue>Lung</tissue>
        <tissue>Placenta</tissue>
    </source>
</reference>
<reference key="3">
    <citation type="journal article" date="2000" name="Genome Biol.">
        <title>Phylogenetic variation and polymorphism at the Toll-like receptor 4 locus (TLR4).</title>
        <authorList>
            <person name="Smirnova I."/>
            <person name="Poltorak A."/>
            <person name="Chan E.K.L."/>
            <person name="McBride C."/>
            <person name="Beutler B."/>
        </authorList>
    </citation>
    <scope>NUCLEOTIDE SEQUENCE [GENOMIC DNA]</scope>
    <scope>FUNCTION</scope>
    <scope>VARIANTS GLY-299 AND ILE-399</scope>
    <scope>CHARACTERIZATION OF VARIANTS GLY-299 AND ILE-399</scope>
    <scope>POLYMORPHISM</scope>
</reference>
<reference key="4">
    <citation type="journal article" date="2000" name="Nat. Genet.">
        <title>TLR4 mutations are associated with endotoxin hyporesponsiveness in humans.</title>
        <authorList>
            <person name="Arbour N.C."/>
            <person name="Lorenz E."/>
            <person name="Schutte B.C."/>
            <person name="Zabner J."/>
            <person name="Kline J.N."/>
            <person name="Jones M."/>
            <person name="Frees K."/>
            <person name="Watt J.L."/>
            <person name="Schwartz D.A."/>
        </authorList>
    </citation>
    <scope>NUCLEOTIDE SEQUENCE [GENOMIC DNA]</scope>
    <scope>VARIANTS GLY-299 AND ILE-399</scope>
</reference>
<reference key="5">
    <citation type="journal article" date="2008" name="Immunogenetics">
        <title>Natural selection in the TLR-related genes in the course of primate evolution.</title>
        <authorList>
            <person name="Nakajima T."/>
            <person name="Ohtani H."/>
            <person name="Satta Y."/>
            <person name="Uno Y."/>
            <person name="Akari H."/>
            <person name="Ishida T."/>
            <person name="Kimura A."/>
        </authorList>
    </citation>
    <scope>NUCLEOTIDE SEQUENCE [MRNA] (ISOFORM 1)</scope>
</reference>
<reference key="6">
    <citation type="journal article" date="2009" name="PLoS ONE">
        <title>The heterogeneous allelic repertoire of human Toll-Like receptor (TLR) genes.</title>
        <authorList>
            <person name="Georgel P."/>
            <person name="Macquin C."/>
            <person name="Bahram S."/>
        </authorList>
    </citation>
    <scope>NUCLEOTIDE SEQUENCE [GENOMIC DNA]</scope>
    <scope>VARIANTS GLY-299 AND ILE-399</scope>
</reference>
<reference key="7">
    <citation type="journal article" date="2004" name="Nat. Genet.">
        <title>Complete sequencing and characterization of 21,243 full-length human cDNAs.</title>
        <authorList>
            <person name="Ota T."/>
            <person name="Suzuki Y."/>
            <person name="Nishikawa T."/>
            <person name="Otsuki T."/>
            <person name="Sugiyama T."/>
            <person name="Irie R."/>
            <person name="Wakamatsu A."/>
            <person name="Hayashi K."/>
            <person name="Sato H."/>
            <person name="Nagai K."/>
            <person name="Kimura K."/>
            <person name="Makita H."/>
            <person name="Sekine M."/>
            <person name="Obayashi M."/>
            <person name="Nishi T."/>
            <person name="Shibahara T."/>
            <person name="Tanaka T."/>
            <person name="Ishii S."/>
            <person name="Yamamoto J."/>
            <person name="Saito K."/>
            <person name="Kawai Y."/>
            <person name="Isono Y."/>
            <person name="Nakamura Y."/>
            <person name="Nagahari K."/>
            <person name="Murakami K."/>
            <person name="Yasuda T."/>
            <person name="Iwayanagi T."/>
            <person name="Wagatsuma M."/>
            <person name="Shiratori A."/>
            <person name="Sudo H."/>
            <person name="Hosoiri T."/>
            <person name="Kaku Y."/>
            <person name="Kodaira H."/>
            <person name="Kondo H."/>
            <person name="Sugawara M."/>
            <person name="Takahashi M."/>
            <person name="Kanda K."/>
            <person name="Yokoi T."/>
            <person name="Furuya T."/>
            <person name="Kikkawa E."/>
            <person name="Omura Y."/>
            <person name="Abe K."/>
            <person name="Kamihara K."/>
            <person name="Katsuta N."/>
            <person name="Sato K."/>
            <person name="Tanikawa M."/>
            <person name="Yamazaki M."/>
            <person name="Ninomiya K."/>
            <person name="Ishibashi T."/>
            <person name="Yamashita H."/>
            <person name="Murakawa K."/>
            <person name="Fujimori K."/>
            <person name="Tanai H."/>
            <person name="Kimata M."/>
            <person name="Watanabe M."/>
            <person name="Hiraoka S."/>
            <person name="Chiba Y."/>
            <person name="Ishida S."/>
            <person name="Ono Y."/>
            <person name="Takiguchi S."/>
            <person name="Watanabe S."/>
            <person name="Yosida M."/>
            <person name="Hotuta T."/>
            <person name="Kusano J."/>
            <person name="Kanehori K."/>
            <person name="Takahashi-Fujii A."/>
            <person name="Hara H."/>
            <person name="Tanase T.-O."/>
            <person name="Nomura Y."/>
            <person name="Togiya S."/>
            <person name="Komai F."/>
            <person name="Hara R."/>
            <person name="Takeuchi K."/>
            <person name="Arita M."/>
            <person name="Imose N."/>
            <person name="Musashino K."/>
            <person name="Yuuki H."/>
            <person name="Oshima A."/>
            <person name="Sasaki N."/>
            <person name="Aotsuka S."/>
            <person name="Yoshikawa Y."/>
            <person name="Matsunawa H."/>
            <person name="Ichihara T."/>
            <person name="Shiohata N."/>
            <person name="Sano S."/>
            <person name="Moriya S."/>
            <person name="Momiyama H."/>
            <person name="Satoh N."/>
            <person name="Takami S."/>
            <person name="Terashima Y."/>
            <person name="Suzuki O."/>
            <person name="Nakagawa S."/>
            <person name="Senoh A."/>
            <person name="Mizoguchi H."/>
            <person name="Goto Y."/>
            <person name="Shimizu F."/>
            <person name="Wakebe H."/>
            <person name="Hishigaki H."/>
            <person name="Watanabe T."/>
            <person name="Sugiyama A."/>
            <person name="Takemoto M."/>
            <person name="Kawakami B."/>
            <person name="Yamazaki M."/>
            <person name="Watanabe K."/>
            <person name="Kumagai A."/>
            <person name="Itakura S."/>
            <person name="Fukuzumi Y."/>
            <person name="Fujimori Y."/>
            <person name="Komiyama M."/>
            <person name="Tashiro H."/>
            <person name="Tanigami A."/>
            <person name="Fujiwara T."/>
            <person name="Ono T."/>
            <person name="Yamada K."/>
            <person name="Fujii Y."/>
            <person name="Ozaki K."/>
            <person name="Hirao M."/>
            <person name="Ohmori Y."/>
            <person name="Kawabata A."/>
            <person name="Hikiji T."/>
            <person name="Kobatake N."/>
            <person name="Inagaki H."/>
            <person name="Ikema Y."/>
            <person name="Okamoto S."/>
            <person name="Okitani R."/>
            <person name="Kawakami T."/>
            <person name="Noguchi S."/>
            <person name="Itoh T."/>
            <person name="Shigeta K."/>
            <person name="Senba T."/>
            <person name="Matsumura K."/>
            <person name="Nakajima Y."/>
            <person name="Mizuno T."/>
            <person name="Morinaga M."/>
            <person name="Sasaki M."/>
            <person name="Togashi T."/>
            <person name="Oyama M."/>
            <person name="Hata H."/>
            <person name="Watanabe M."/>
            <person name="Komatsu T."/>
            <person name="Mizushima-Sugano J."/>
            <person name="Satoh T."/>
            <person name="Shirai Y."/>
            <person name="Takahashi Y."/>
            <person name="Nakagawa K."/>
            <person name="Okumura K."/>
            <person name="Nagase T."/>
            <person name="Nomura N."/>
            <person name="Kikuchi H."/>
            <person name="Masuho Y."/>
            <person name="Yamashita R."/>
            <person name="Nakai K."/>
            <person name="Yada T."/>
            <person name="Nakamura Y."/>
            <person name="Ohara O."/>
            <person name="Isogai T."/>
            <person name="Sugano S."/>
        </authorList>
    </citation>
    <scope>NUCLEOTIDE SEQUENCE [LARGE SCALE MRNA] (ISOFORMS 1; 2 AND 3)</scope>
    <source>
        <tissue>Hippocampus</tissue>
        <tissue>Kidney</tissue>
        <tissue>Uterus</tissue>
    </source>
</reference>
<reference key="8">
    <citation type="journal article" date="2004" name="Nature">
        <title>DNA sequence and analysis of human chromosome 9.</title>
        <authorList>
            <person name="Humphray S.J."/>
            <person name="Oliver K."/>
            <person name="Hunt A.R."/>
            <person name="Plumb R.W."/>
            <person name="Loveland J.E."/>
            <person name="Howe K.L."/>
            <person name="Andrews T.D."/>
            <person name="Searle S."/>
            <person name="Hunt S.E."/>
            <person name="Scott C.E."/>
            <person name="Jones M.C."/>
            <person name="Ainscough R."/>
            <person name="Almeida J.P."/>
            <person name="Ambrose K.D."/>
            <person name="Ashwell R.I.S."/>
            <person name="Babbage A.K."/>
            <person name="Babbage S."/>
            <person name="Bagguley C.L."/>
            <person name="Bailey J."/>
            <person name="Banerjee R."/>
            <person name="Barker D.J."/>
            <person name="Barlow K.F."/>
            <person name="Bates K."/>
            <person name="Beasley H."/>
            <person name="Beasley O."/>
            <person name="Bird C.P."/>
            <person name="Bray-Allen S."/>
            <person name="Brown A.J."/>
            <person name="Brown J.Y."/>
            <person name="Burford D."/>
            <person name="Burrill W."/>
            <person name="Burton J."/>
            <person name="Carder C."/>
            <person name="Carter N.P."/>
            <person name="Chapman J.C."/>
            <person name="Chen Y."/>
            <person name="Clarke G."/>
            <person name="Clark S.Y."/>
            <person name="Clee C.M."/>
            <person name="Clegg S."/>
            <person name="Collier R.E."/>
            <person name="Corby N."/>
            <person name="Crosier M."/>
            <person name="Cummings A.T."/>
            <person name="Davies J."/>
            <person name="Dhami P."/>
            <person name="Dunn M."/>
            <person name="Dutta I."/>
            <person name="Dyer L.W."/>
            <person name="Earthrowl M.E."/>
            <person name="Faulkner L."/>
            <person name="Fleming C.J."/>
            <person name="Frankish A."/>
            <person name="Frankland J.A."/>
            <person name="French L."/>
            <person name="Fricker D.G."/>
            <person name="Garner P."/>
            <person name="Garnett J."/>
            <person name="Ghori J."/>
            <person name="Gilbert J.G.R."/>
            <person name="Glison C."/>
            <person name="Grafham D.V."/>
            <person name="Gribble S."/>
            <person name="Griffiths C."/>
            <person name="Griffiths-Jones S."/>
            <person name="Grocock R."/>
            <person name="Guy J."/>
            <person name="Hall R.E."/>
            <person name="Hammond S."/>
            <person name="Harley J.L."/>
            <person name="Harrison E.S.I."/>
            <person name="Hart E.A."/>
            <person name="Heath P.D."/>
            <person name="Henderson C.D."/>
            <person name="Hopkins B.L."/>
            <person name="Howard P.J."/>
            <person name="Howden P.J."/>
            <person name="Huckle E."/>
            <person name="Johnson C."/>
            <person name="Johnson D."/>
            <person name="Joy A.A."/>
            <person name="Kay M."/>
            <person name="Keenan S."/>
            <person name="Kershaw J.K."/>
            <person name="Kimberley A.M."/>
            <person name="King A."/>
            <person name="Knights A."/>
            <person name="Laird G.K."/>
            <person name="Langford C."/>
            <person name="Lawlor S."/>
            <person name="Leongamornlert D.A."/>
            <person name="Leversha M."/>
            <person name="Lloyd C."/>
            <person name="Lloyd D.M."/>
            <person name="Lovell J."/>
            <person name="Martin S."/>
            <person name="Mashreghi-Mohammadi M."/>
            <person name="Matthews L."/>
            <person name="McLaren S."/>
            <person name="McLay K.E."/>
            <person name="McMurray A."/>
            <person name="Milne S."/>
            <person name="Nickerson T."/>
            <person name="Nisbett J."/>
            <person name="Nordsiek G."/>
            <person name="Pearce A.V."/>
            <person name="Peck A.I."/>
            <person name="Porter K.M."/>
            <person name="Pandian R."/>
            <person name="Pelan S."/>
            <person name="Phillimore B."/>
            <person name="Povey S."/>
            <person name="Ramsey Y."/>
            <person name="Rand V."/>
            <person name="Scharfe M."/>
            <person name="Sehra H.K."/>
            <person name="Shownkeen R."/>
            <person name="Sims S.K."/>
            <person name="Skuce C.D."/>
            <person name="Smith M."/>
            <person name="Steward C.A."/>
            <person name="Swarbreck D."/>
            <person name="Sycamore N."/>
            <person name="Tester J."/>
            <person name="Thorpe A."/>
            <person name="Tracey A."/>
            <person name="Tromans A."/>
            <person name="Thomas D.W."/>
            <person name="Wall M."/>
            <person name="Wallis J.M."/>
            <person name="West A.P."/>
            <person name="Whitehead S.L."/>
            <person name="Willey D.L."/>
            <person name="Williams S.A."/>
            <person name="Wilming L."/>
            <person name="Wray P.W."/>
            <person name="Young L."/>
            <person name="Ashurst J.L."/>
            <person name="Coulson A."/>
            <person name="Blocker H."/>
            <person name="Durbin R.M."/>
            <person name="Sulston J.E."/>
            <person name="Hubbard T."/>
            <person name="Jackson M.J."/>
            <person name="Bentley D.R."/>
            <person name="Beck S."/>
            <person name="Rogers J."/>
            <person name="Dunham I."/>
        </authorList>
    </citation>
    <scope>NUCLEOTIDE SEQUENCE [LARGE SCALE GENOMIC DNA]</scope>
</reference>
<reference key="9">
    <citation type="submission" date="2005-07" db="EMBL/GenBank/DDBJ databases">
        <authorList>
            <person name="Mural R.J."/>
            <person name="Istrail S."/>
            <person name="Sutton G.G."/>
            <person name="Florea L."/>
            <person name="Halpern A.L."/>
            <person name="Mobarry C.M."/>
            <person name="Lippert R."/>
            <person name="Walenz B."/>
            <person name="Shatkay H."/>
            <person name="Dew I."/>
            <person name="Miller J.R."/>
            <person name="Flanigan M.J."/>
            <person name="Edwards N.J."/>
            <person name="Bolanos R."/>
            <person name="Fasulo D."/>
            <person name="Halldorsson B.V."/>
            <person name="Hannenhalli S."/>
            <person name="Turner R."/>
            <person name="Yooseph S."/>
            <person name="Lu F."/>
            <person name="Nusskern D.R."/>
            <person name="Shue B.C."/>
            <person name="Zheng X.H."/>
            <person name="Zhong F."/>
            <person name="Delcher A.L."/>
            <person name="Huson D.H."/>
            <person name="Kravitz S.A."/>
            <person name="Mouchard L."/>
            <person name="Reinert K."/>
            <person name="Remington K.A."/>
            <person name="Clark A.G."/>
            <person name="Waterman M.S."/>
            <person name="Eichler E.E."/>
            <person name="Adams M.D."/>
            <person name="Hunkapiller M.W."/>
            <person name="Myers E.W."/>
            <person name="Venter J.C."/>
        </authorList>
    </citation>
    <scope>NUCLEOTIDE SEQUENCE [LARGE SCALE GENOMIC DNA]</scope>
</reference>
<reference key="10">
    <citation type="journal article" date="2004" name="Genome Res.">
        <title>The status, quality, and expansion of the NIH full-length cDNA project: the Mammalian Gene Collection (MGC).</title>
        <authorList>
            <consortium name="The MGC Project Team"/>
        </authorList>
    </citation>
    <scope>NUCLEOTIDE SEQUENCE [LARGE SCALE MRNA]</scope>
    <source>
        <tissue>Cerebellum</tissue>
    </source>
</reference>
<reference key="11">
    <citation type="submission" date="2007-03" db="EMBL/GenBank/DDBJ databases">
        <authorList>
            <person name="Liu Z."/>
            <person name="Li N."/>
            <person name="Wang J."/>
            <person name="Xiao W."/>
        </authorList>
    </citation>
    <scope>NUCLEOTIDE SEQUENCE [GENOMIC DNA] OF 1-86</scope>
</reference>
<reference key="12">
    <citation type="journal article" date="2004" name="Protein Sci.">
        <title>Signal peptide prediction based on analysis of experimentally verified cleavage sites.</title>
        <authorList>
            <person name="Zhang Z."/>
            <person name="Henzel W.J."/>
        </authorList>
    </citation>
    <scope>PROTEIN SEQUENCE OF 24-38</scope>
</reference>
<reference key="13">
    <citation type="journal article" date="2000" name="Nature">
        <title>Structural basis for signal transduction by the Toll/interleukin-1 receptor domains.</title>
        <authorList>
            <person name="Xu Y."/>
            <person name="Tao X."/>
            <person name="Shen B."/>
            <person name="Horng T."/>
            <person name="Medzhitov R."/>
            <person name="Manley J.L."/>
            <person name="Tong L."/>
        </authorList>
    </citation>
    <scope>MUTAGENESIS OF GLU-697; ARG-710; ASP-711 AND PRO-714</scope>
</reference>
<reference key="14">
    <citation type="journal article" date="2001" name="J. Biol. Chem.">
        <title>Lipopolysaccharide is in close proximity to each of the proteins in its membrane receptor complex. transfer from CD14 to TLR4 and MD-2.</title>
        <authorList>
            <person name="da Silva Correia J."/>
            <person name="Soldau K."/>
            <person name="Christen U."/>
            <person name="Tobias P.S."/>
            <person name="Ulevitch R.J."/>
        </authorList>
    </citation>
    <scope>SUBUNIT</scope>
    <scope>SUBCELLULAR LOCATION</scope>
</reference>
<reference key="15">
    <citation type="journal article" date="2002" name="J. Biol. Chem.">
        <title>MD-2 and TLR4 N-linked glycosylations are important for a functional lipopolysaccharide receptor.</title>
        <authorList>
            <person name="da Silva Correia J."/>
            <person name="Ulevitch R.J."/>
        </authorList>
    </citation>
    <scope>GLYCOSYLATION AT ASN-35; ASN-173; ASN-205; ASN-282; ASN-309; ASN-497; ASN-526; ASN-575 AND ASN-624</scope>
    <scope>MUTAGENESIS OF ASN-526 AND ASN-575</scope>
</reference>
<reference key="16">
    <citation type="journal article" date="2003" name="J. Biol. Chem.">
        <title>TIR-containing adapter molecule (TICAM)-2, a bridging adapter recruiting to toll-like receptor 4 TICAM-1 that induces interferon-beta.</title>
        <authorList>
            <person name="Oshiumi H."/>
            <person name="Sasai M."/>
            <person name="Shida K."/>
            <person name="Fujita T."/>
            <person name="Matsumoto M."/>
            <person name="Seya T."/>
        </authorList>
    </citation>
    <scope>INTERACTION WITH TICAM2</scope>
</reference>
<reference key="17">
    <citation type="journal article" date="2003" name="J. Exp. Med.">
        <title>LPS-TLR4 signaling to IRF-3/7 and NF-kappaB involves the toll adapters TRAM and TRIF.</title>
        <authorList>
            <person name="Fitzgerald K.A."/>
            <person name="Rowe D.C."/>
            <person name="Barnes B.J."/>
            <person name="Caffrey D.R."/>
            <person name="Visintin A."/>
            <person name="Latz E."/>
            <person name="Monks B."/>
            <person name="Pitha P.M."/>
            <person name="Golenbock D.T."/>
        </authorList>
    </citation>
    <scope>FUNCTION</scope>
</reference>
<reference key="18">
    <citation type="journal article" date="2004" name="J. Immunol.">
        <title>Regulation of IFN regulatory factor-7 and IFN-alpha production by enveloped virus and lipopolysaccharide in human plasmacytoid dendritic cells.</title>
        <authorList>
            <person name="Dai J."/>
            <person name="Megjugorac N.J."/>
            <person name="Amrute S.B."/>
            <person name="Fitzgerald-Bocarsly P."/>
        </authorList>
    </citation>
    <scope>FUNCTION</scope>
    <scope>INDUCTION BY LPS</scope>
</reference>
<reference key="19">
    <citation type="journal article" date="2004" name="J. Immunol.">
        <title>Direct interaction of TLR4 with NAD(P)H oxidase 4 isozyme is essential for lipopolysaccharide-induced production of reactive oxygen species and activation of NF-kappa B.</title>
        <authorList>
            <person name="Park H.S."/>
            <person name="Jung H.Y."/>
            <person name="Park E.Y."/>
            <person name="Kim J."/>
            <person name="Lee W.J."/>
            <person name="Bae Y.S."/>
        </authorList>
    </citation>
    <scope>INTERACTION WITH NOX4</scope>
</reference>
<reference key="20">
    <citation type="journal article" date="2005" name="J. Biol. Chem.">
        <title>Mycobacterium tuberculosis heat shock proteins use diverse Toll-like receptor pathways to activate pro-inflammatory signals.</title>
        <authorList>
            <person name="Bulut Y."/>
            <person name="Michelsen K.S."/>
            <person name="Hayrapetian L."/>
            <person name="Naiki Y."/>
            <person name="Spallek R."/>
            <person name="Singh M."/>
            <person name="Arditi M."/>
        </authorList>
    </citation>
    <scope>FUNCTION</scope>
</reference>
<reference key="21">
    <citation type="journal article" date="2006" name="Infect. Immun.">
        <title>The mycobacterial 38-kilodalton glycolipoprotein antigen activates the mitogen-activated protein kinase pathway and release of proinflammatory cytokines through Toll-like receptors 2 and 4 in human monocytes.</title>
        <authorList>
            <person name="Jung S.B."/>
            <person name="Yang C.S."/>
            <person name="Lee J.S."/>
            <person name="Shin A.R."/>
            <person name="Jung S.S."/>
            <person name="Son J.W."/>
            <person name="Harding C.V."/>
            <person name="Kim H.J."/>
            <person name="Park J.K."/>
            <person name="Paik T.H."/>
            <person name="Song C.H."/>
            <person name="Jo E.K."/>
        </authorList>
    </citation>
    <scope>FUNCTION</scope>
    <source>
        <tissue>Monocyte</tissue>
    </source>
</reference>
<reference key="22">
    <citation type="journal article" date="2007" name="Virology">
        <title>Vesicular stomatitis virus glycoprotein G activates a specific antiviral Toll-like receptor 4-dependent pathway.</title>
        <authorList>
            <person name="Georgel P."/>
            <person name="Jiang Z."/>
            <person name="Kunz S."/>
            <person name="Janssen E."/>
            <person name="Mols J."/>
            <person name="Hoebe K."/>
            <person name="Bahram S."/>
            <person name="Oldstone M.B."/>
            <person name="Beutler B."/>
        </authorList>
    </citation>
    <scope>FUNCTION</scope>
</reference>
<reference key="23">
    <citation type="journal article" date="2007" name="Int. Immunol.">
        <title>Effects of TREM-1 activation in human neutrophils: activation of signaling pathways, recruitment into lipid rafts and association with TLR4.</title>
        <authorList>
            <person name="Fortin C.F."/>
            <person name="Lesur O."/>
            <person name="Fulop T. Jr."/>
        </authorList>
    </citation>
    <scope>INTERACTION WITH TREM1</scope>
    <scope>SUBCELLULAR LOCATION</scope>
</reference>
<reference key="24">
    <citation type="journal article" date="2007" name="Circ. Res.">
        <title>Toll-like receptor-4 mediates vascular inflammation and insulin resistance in diet-induced obesity.</title>
        <authorList>
            <person name="Kim F."/>
            <person name="Pham M."/>
            <person name="Luttrell I."/>
            <person name="Bannerman D.D."/>
            <person name="Tupper J."/>
            <person name="Thaler J."/>
            <person name="Hawn T.R."/>
            <person name="Raines E.W."/>
            <person name="Schwartz M.W."/>
        </authorList>
    </citation>
    <scope>FUNCTION</scope>
</reference>
<reference key="25">
    <citation type="journal article" date="2010" name="Nat. Commun.">
        <title>Folding of Toll-like receptors by the HSP90 paralogue gp96 requires a substrate-specific cochaperone.</title>
        <authorList>
            <person name="Liu B."/>
            <person name="Yang Y."/>
            <person name="Qiu Z."/>
            <person name="Staron M."/>
            <person name="Hong F."/>
            <person name="Li Y."/>
            <person name="Wu S."/>
            <person name="Li Y."/>
            <person name="Hao B."/>
            <person name="Bona R."/>
            <person name="Han D."/>
            <person name="Li Z."/>
        </authorList>
    </citation>
    <scope>INTERACTION WITH HSP90B1</scope>
</reference>
<reference key="26">
    <citation type="journal article" date="2011" name="Eur. Cytokine Netw.">
        <title>TREM-1 interaction with the LPS/TLR4 receptor complex.</title>
        <authorList>
            <person name="Arts R.J."/>
            <person name="Joosten L.A."/>
            <person name="Dinarello C.A."/>
            <person name="Kullberg B.J."/>
            <person name="van der Meer J.W."/>
            <person name="Netea M.G."/>
        </authorList>
    </citation>
    <scope>FUNCTION</scope>
    <scope>SUBCELLULAR LOCATION</scope>
    <scope>INTERACTION WITH TREM1</scope>
</reference>
<reference key="27">
    <citation type="journal article" date="2012" name="Nat. Commun.">
        <authorList>
            <person name="Liu B."/>
            <person name="Yang Y."/>
            <person name="Qiu Z."/>
            <person name="Staron M."/>
            <person name="Hong F."/>
            <person name="Li Y."/>
            <person name="Wu S."/>
            <person name="Li Y."/>
            <person name="Hao B."/>
            <person name="Bona R."/>
            <person name="Han D."/>
            <person name="Li Z."/>
        </authorList>
    </citation>
    <scope>ERRATUM OF PUBMED:20865800</scope>
</reference>
<reference key="28">
    <citation type="journal article" date="2010" name="Nat. Immunol.">
        <title>CD36 ligands promote sterile inflammation through assembly of a Toll-like receptor 4 and 6 heterodimer.</title>
        <authorList>
            <person name="Stewart C.R."/>
            <person name="Stuart L.M."/>
            <person name="Wilkinson K."/>
            <person name="van Gils J.M."/>
            <person name="Deng J."/>
            <person name="Halle A."/>
            <person name="Rayner K.J."/>
            <person name="Boyer L."/>
            <person name="Zhong R."/>
            <person name="Frazier W.A."/>
            <person name="Lacy-Hulbert A."/>
            <person name="El Khoury J."/>
            <person name="Golenbock D.T."/>
            <person name="Moore K.J."/>
        </authorList>
    </citation>
    <scope>FUNCTION</scope>
    <scope>INTERACTION WITH CD36 AND TLR6</scope>
    <scope>SUBCELLULAR LOCATION</scope>
</reference>
<reference key="29">
    <citation type="journal article" date="2010" name="J. Virol.">
        <title>Interaction between Ebola virus glycoprotein and host toll-like receptor 4 leads to induction of proinflammatory cytokines and SOCS1.</title>
        <authorList>
            <person name="Okumura A."/>
            <person name="Pitha P.M."/>
            <person name="Yoshimura A."/>
            <person name="Harty R.N."/>
        </authorList>
    </citation>
    <scope>FUNCTION</scope>
    <scope>INTERACTION WITH EBOLA VIRUS GLYCOPROTEIN (MICROBIAL INFECTION)</scope>
</reference>
<reference key="30">
    <citation type="journal article" date="2010" name="Nat. Immunol.">
        <title>Crucial role for human Toll-like receptor 4 in the development of contact allergy to nickel.</title>
        <authorList>
            <person name="Schmidt M."/>
            <person name="Raghavan B."/>
            <person name="Mueller V."/>
            <person name="Vogl T."/>
            <person name="Fejer G."/>
            <person name="Tchaptchet S."/>
            <person name="Keck S."/>
            <person name="Kalis C."/>
            <person name="Nielsen P.J."/>
            <person name="Galanos C."/>
            <person name="Roth J."/>
            <person name="Skerra A."/>
            <person name="Martin S.F."/>
            <person name="Freudenberg M.A."/>
            <person name="Goebeler M."/>
        </authorList>
    </citation>
    <scope>FUNCTION</scope>
    <scope>MUTAGENESIS OF HIS-431; HIS-456 AND HIS-458</scope>
    <scope>INVOLVEMENT IN CONTACT ALLERGY TO NICKEL</scope>
</reference>
<reference key="31">
    <citation type="journal article" date="2012" name="Cell. Mol. Immunol.">
        <title>MLK4 has negative effect on TLR4 signaling.</title>
        <authorList>
            <person name="Seit-Nebi A."/>
            <person name="Cheng W."/>
            <person name="Xu H."/>
            <person name="Han J."/>
        </authorList>
    </citation>
    <scope>INTERACTION WITH MAP3K21</scope>
</reference>
<reference key="32">
    <citation type="journal article" date="2013" name="Atherosclerosis">
        <title>CD14 and TLR4 mediate cytokine release promoted by electronegative LDL in monocytes.</title>
        <authorList>
            <person name="Estruch M."/>
            <person name="Bancells C."/>
            <person name="Beloki L."/>
            <person name="Sanchez-Quesada J.L."/>
            <person name="Ordonez-Llanos J."/>
            <person name="Benitez S."/>
        </authorList>
    </citation>
    <scope>FUNCTION</scope>
</reference>
<reference key="33">
    <citation type="journal article" date="2013" name="Proc. Natl. Acad. Sci. U.S.A.">
        <title>Molecular mechanisms for the subversion of MyD88 signaling by TcpC from virulent uropathogenic Escherichia coli.</title>
        <authorList>
            <person name="Snyder G.A."/>
            <person name="Cirl C."/>
            <person name="Jiang J."/>
            <person name="Chen K."/>
            <person name="Waldhuber A."/>
            <person name="Smith P."/>
            <person name="Roemmler F."/>
            <person name="Snyder N."/>
            <person name="Fresquez T."/>
            <person name="Duerr S."/>
            <person name="Tjandra N."/>
            <person name="Miethke T."/>
            <person name="Xiao T.S."/>
        </authorList>
    </citation>
    <scope>INTERACTION WITH E.COLI PROTEIN TCPC (MICROBIAL INFECTION)</scope>
</reference>
<reference key="34">
    <citation type="journal article" date="2014" name="J. Biol. Chem.">
        <title>Mechanism of bacterial interference with TLR4 signaling by Brucella Toll/interleukin-1 receptor domain-containing protein TcpB.</title>
        <authorList>
            <person name="Alaidarous M."/>
            <person name="Ve T."/>
            <person name="Casey L.W."/>
            <person name="Valkov E."/>
            <person name="Ericsson D.J."/>
            <person name="Ullah M.O."/>
            <person name="Schembri M.A."/>
            <person name="Mansell A."/>
            <person name="Sweet M.J."/>
            <person name="Kobe B."/>
        </authorList>
    </citation>
    <scope>INTERACTION WITH B.MELITENSIS PROTEIN TCPB (MICROBIAL INFECTION)</scope>
</reference>
<reference key="35">
    <citation type="journal article" date="2015" name="EMBO Rep.">
        <title>WDFY1 mediates TLR3/4 signaling by recruiting TRIF.</title>
        <authorList>
            <person name="Hu Y.H."/>
            <person name="Zhang Y."/>
            <person name="Jiang L.Q."/>
            <person name="Wang S."/>
            <person name="Lei C.Q."/>
            <person name="Sun M.S."/>
            <person name="Shu H.B."/>
            <person name="Liu Y."/>
        </authorList>
    </citation>
    <scope>INTERACTION WITH TICAM1 AND TICAM2</scope>
</reference>
<reference key="36">
    <citation type="journal article" date="2016" name="J. Immunol.">
        <title>Raftlin controls lipopolysaccharide-induced TLR4 internalization and TICAM-1 signaling in a cell type-specific manner.</title>
        <authorList>
            <person name="Tatematsu M."/>
            <person name="Yoshida R."/>
            <person name="Morioka Y."/>
            <person name="Ishii N."/>
            <person name="Funami K."/>
            <person name="Watanabe A."/>
            <person name="Saeki K."/>
            <person name="Seya T."/>
            <person name="Matsumoto M."/>
        </authorList>
    </citation>
    <scope>FUNCTION</scope>
    <scope>INTERACTION WITH RFTN1</scope>
    <scope>SUBCELLULAR LOCATION</scope>
    <scope>TISSUE SPECIFICITY</scope>
    <scope>INDUCTION BY LPS</scope>
</reference>
<reference key="37">
    <citation type="journal article" date="2017" name="Nat. Commun.">
        <title>NMI and IFP35 serve as proinflammatory DAMPs during cellular infection and injury.</title>
        <authorList>
            <person name="Xiahou Z."/>
            <person name="Wang X."/>
            <person name="Shen J."/>
            <person name="Zhu X."/>
            <person name="Xu F."/>
            <person name="Hu R."/>
            <person name="Guo D."/>
            <person name="Li H."/>
            <person name="Tian Y."/>
            <person name="Liu Y."/>
            <person name="Liang H."/>
        </authorList>
    </citation>
    <scope>FUNCTION</scope>
</reference>
<reference key="38">
    <citation type="journal article" date="2017" name="Neuron">
        <title>The SARM1 Toll/Interleukin-1 receptor domain possesses intrinsic NAD+ cleavage activity that promotes pathological axonal degeneration.</title>
        <authorList>
            <person name="Essuman K."/>
            <person name="Summers D.W."/>
            <person name="Sasaki Y."/>
            <person name="Mao X."/>
            <person name="DiAntonio A."/>
            <person name="Milbrandt J."/>
        </authorList>
    </citation>
    <scope>LACK OF NADASE ACTIVITY</scope>
</reference>
<reference key="39">
    <citation type="journal article" date="2019" name="J. Biol. Chem.">
        <title>TRAF3-interacting JNK-activating modulator promotes inflammation by stimulating translocation of Toll-like receptor 4 to lipid rafts.</title>
        <authorList>
            <person name="Li Y."/>
            <person name="Guan J."/>
            <person name="Wang W."/>
            <person name="Hou C."/>
            <person name="Zhou L."/>
            <person name="Ma J."/>
            <person name="Cheng Y."/>
            <person name="Jiao S."/>
            <person name="Zhou Z."/>
        </authorList>
    </citation>
    <scope>INTERACTION WITH TRAF3IP3</scope>
</reference>
<reference key="40">
    <citation type="journal article" date="2021" name="Clin. Exp. Immunol.">
        <title>Mycoplasma pneumoniae lipids license TLR-4 for activation of NLRP3 inflammasome and autophagy to evoke a proinflammatory response.</title>
        <authorList>
            <person name="Luo H."/>
            <person name="He J."/>
            <person name="Qin L."/>
            <person name="Chen Y."/>
            <person name="Chen L."/>
            <person name="Li R."/>
            <person name="Zeng Y."/>
            <person name="Zhu C."/>
            <person name="You X."/>
            <person name="Wu Y."/>
        </authorList>
    </citation>
    <scope>FUNCTION</scope>
</reference>
<reference key="41">
    <citation type="journal article" date="2022" name="Int. J. Mol. Sci.">
        <title>PAUF Induces Migration of Human Pancreatic Cancer Cells Exclusively via the TLR4/MyD88/NF-kappaB Signaling Pathway.</title>
        <authorList>
            <person name="Youn S.E."/>
            <person name="Jiang F."/>
            <person name="Won H.Y."/>
            <person name="Hong D.E."/>
            <person name="Kang T.H."/>
            <person name="Park Y.Y."/>
            <person name="Koh S.S."/>
        </authorList>
    </citation>
    <scope>FUNCTION</scope>
    <scope>SUBCELLULAR LOCATION</scope>
    <scope>TISSUE SPECIFICITY</scope>
    <scope>INTERACTION WITH ZG16B/PAUF; TICAM1 AND MYD88</scope>
</reference>
<reference key="42">
    <citation type="journal article" date="2023" name="BMB Rep.">
        <title>Recombinant human KAI1/CD82 attenuates M1 macrophage polarization on LPS-stimulated RAW264.7 cells via blocking TLR4/JNK/NF-kappaB signal pathway.</title>
        <authorList>
            <person name="Lee H."/>
            <person name="Han J.H."/>
            <person name="An K."/>
            <person name="Kang Y.J."/>
            <person name="Hwangbo H."/>
            <person name="Heo J.H."/>
            <person name="Choi B.H."/>
            <person name="Kim J.J."/>
            <person name="Kim S.R."/>
            <person name="Lee S.Y."/>
            <person name="Hur J."/>
        </authorList>
    </citation>
    <scope>FUNCTION</scope>
    <scope>SUBCELLULAR LOCATION</scope>
    <scope>INTERACTION WITH CD82</scope>
</reference>
<reference key="43">
    <citation type="journal article" date="2023" name="Cell Death Dis.">
        <title>RNF128 regulates neutrophil infiltration and myeloperoxidase functions to prevent acute lung injury.</title>
        <authorList>
            <person name="Liu P.Y."/>
            <person name="Chen C.Y."/>
            <person name="Lin Y.L."/>
            <person name="Lin C.M."/>
            <person name="Tsai W.C."/>
            <person name="Tsai Y.L."/>
            <person name="Lin G.J."/>
            <person name="Chen Y.G."/>
            <person name="Wang S.Y."/>
            <person name="Sun R.N."/>
            <person name="Huang Y.C."/>
            <person name="Chang H."/>
            <person name="Chen Y.C."/>
        </authorList>
    </citation>
    <scope>FUNCTION</scope>
    <scope>UBIQUITINATION BY RNF128</scope>
</reference>
<reference evidence="49" key="44">
    <citation type="journal article" date="2024" name="EMBO J.">
        <title>A mosquito salivary protein-driven influx of myeloid cells facilitates flavivirus transmission.</title>
        <authorList>
            <person name="Wang Z."/>
            <person name="Nie K."/>
            <person name="Liang Y."/>
            <person name="Niu J."/>
            <person name="Yu X."/>
            <person name="Zhang O."/>
            <person name="Liu L."/>
            <person name="Shi X."/>
            <person name="Wang Y."/>
            <person name="Feng X."/>
            <person name="Zhu Y."/>
            <person name="Wang P."/>
            <person name="Cheng G."/>
        </authorList>
    </citation>
    <scope>INTERACTION WITH MOSQUITO NEUTROPHIL RECRUITMENT PROTEIN</scope>
</reference>
<reference key="45">
    <citation type="journal article" date="2024" name="Cell">
        <title>Positive selection CRISPR screens reveal a druggable pocket in an oligosaccharyltransferase required for inflammatory signaling to NF-kappaB.</title>
        <authorList>
            <person name="Lampson B.L."/>
            <person name="Ramrez A.S."/>
            <person name="Baro M."/>
            <person name="He L."/>
            <person name="Hegde M."/>
            <person name="Koduri V."/>
            <person name="Pfaff J.L."/>
            <person name="Hanna R.E."/>
            <person name="Kowal J."/>
            <person name="Shirole N.H."/>
            <person name="He Y."/>
            <person name="Doench J.G."/>
            <person name="Contessa J.N."/>
            <person name="Locher K.P."/>
            <person name="Kaelin W.G."/>
        </authorList>
    </citation>
    <scope>SUBCELLULAR LOCATION</scope>
    <scope>GLYCOSYLATION AT ASN-526 AND ASN-575</scope>
</reference>
<reference key="46">
    <citation type="journal article" date="2007" name="Cell">
        <title>Crystal structure of the TLR4-MD-2 complex with bound endotoxin antagonist Eritoran.</title>
        <authorList>
            <person name="Kim H.M."/>
            <person name="Park B.S."/>
            <person name="Kim J.-I."/>
            <person name="Kim S.E."/>
            <person name="Lee J."/>
            <person name="Oh S.C."/>
            <person name="Enkhbayar P."/>
            <person name="Matsushima N."/>
            <person name="Lee H."/>
            <person name="Yoo O.J."/>
            <person name="Lee J.-O."/>
        </authorList>
    </citation>
    <scope>X-RAY CRYSTALLOGRAPHY (1.7 ANGSTROMS) OF 27-228 IN COMPLEX WITH LY96</scope>
    <scope>SUBUNIT</scope>
    <scope>DISULFIDE BONDS</scope>
    <scope>GLYCOSYLATION AT ASN-35; ASN-173 AND ASN-205</scope>
</reference>
<reference key="47">
    <citation type="journal article" date="2009" name="Nature">
        <title>The structural basis of lipopolysaccharide recognition by the TLR4-MD-2 complex.</title>
        <authorList>
            <person name="Park B.S."/>
            <person name="Song D.H."/>
            <person name="Kim H.M."/>
            <person name="Choi B.-S."/>
            <person name="Lee H."/>
            <person name="Lee J.-O."/>
        </authorList>
    </citation>
    <scope>X-RAY CRYSTALLOGRAPHY (3.1 ANGSTROMS) OF 27-631 IN COMPLEX WITH LY96 AND LIPOPOLYSACCHARIDE</scope>
    <scope>SUBUNIT</scope>
    <scope>DISULFIDE BONDS</scope>
    <scope>GLYCOSYLATION AT ASN-173; ASN-205; ASN-497 AND ASN-526 AND ASN-575</scope>
</reference>
<reference key="48">
    <citation type="journal article" date="2012" name="PLoS ONE">
        <title>Structure-based rational design of a Toll-like receptor 4 (TLR4) decoy receptor with high binding affinity for a target protein.</title>
        <authorList>
            <person name="Han J."/>
            <person name="Kim H.J."/>
            <person name="Lee S.C."/>
            <person name="Hong S."/>
            <person name="Park K."/>
            <person name="Jeon Y.H."/>
            <person name="Kim D."/>
            <person name="Cheong H.K."/>
            <person name="Kim H.S."/>
        </authorList>
    </citation>
    <scope>X-RAY CRYSTALLOGRAPHY (2.37 ANGSTROMS) OF 28-228</scope>
    <scope>GLYCOSYLATION AT ASN-35 AND ASN-173</scope>
    <scope>DISULFIDE BONDS</scope>
</reference>
<reference key="49">
    <citation type="journal article" date="2001" name="Genetics">
        <title>Excess of rare amino acid polymorphisms in the Toll-like receptor 4 in humans.</title>
        <authorList>
            <person name="Smirnova I."/>
            <person name="Hamblin M.T."/>
            <person name="McBride C."/>
            <person name="Beutler B."/>
            <person name="Di Rienzo A."/>
        </authorList>
    </citation>
    <scope>VARIANTS ARG-188; SER-246; GLY-299; SER-329; ILE-399; LEU-443; LYS-474; HIS-510; ARG-694; HIS-763 AND HIS-834</scope>
</reference>
<reference key="50">
    <citation type="journal article" date="2005" name="Hum. Mol. Genet.">
        <title>Toll-like receptor 4 variant D299G is associated with susceptibility to age-related macular degeneration.</title>
        <authorList>
            <person name="Zareparsi S."/>
            <person name="Buraczynska M."/>
            <person name="Branham K.E.H."/>
            <person name="Shah S."/>
            <person name="Eng D."/>
            <person name="Li M."/>
            <person name="Pawar H."/>
            <person name="Yashar B.M."/>
            <person name="Moroi S.E."/>
            <person name="Lichter P.R."/>
            <person name="Petty H.R."/>
            <person name="Richards J.E."/>
            <person name="Abecasis G.R."/>
            <person name="Elner V.M."/>
            <person name="Swaroop A."/>
        </authorList>
    </citation>
    <scope>VARIANT GLY-299</scope>
    <scope>ASSOCIATION WITH ARMD SUSCEPTIBILITY</scope>
</reference>
<reference key="51">
    <citation type="journal article" date="2015" name="Proc. Natl. Acad. Sci. U.S.A.">
        <title>Neomorphic effects of recurrent somatic mutations in Yin Yang 1 in insulin-producing adenomas.</title>
        <authorList>
            <person name="Cromer M.K."/>
            <person name="Choi M."/>
            <person name="Nelson-Williams C."/>
            <person name="Fonseca A.L."/>
            <person name="Kunstman J.W."/>
            <person name="Korah R.M."/>
            <person name="Overton J.D."/>
            <person name="Mane S."/>
            <person name="Kenney B."/>
            <person name="Malchoff C.D."/>
            <person name="Stalberg P."/>
            <person name="Akerstroem G."/>
            <person name="Westin G."/>
            <person name="Hellman P."/>
            <person name="Carling T."/>
            <person name="Bjoerklund P."/>
            <person name="Lifton R.P."/>
        </authorList>
    </citation>
    <scope>VARIANT ASP-287</scope>
</reference>
<evidence type="ECO:0000250" key="1">
    <source>
        <dbReference type="UniProtKB" id="Q9QUK6"/>
    </source>
</evidence>
<evidence type="ECO:0000255" key="2"/>
<evidence type="ECO:0000255" key="3">
    <source>
        <dbReference type="PROSITE-ProRule" id="PRU00204"/>
    </source>
</evidence>
<evidence type="ECO:0000269" key="4">
    <source>
    </source>
</evidence>
<evidence type="ECO:0000269" key="5">
    <source>
    </source>
</evidence>
<evidence type="ECO:0000269" key="6">
    <source>
    </source>
</evidence>
<evidence type="ECO:0000269" key="7">
    <source>
    </source>
</evidence>
<evidence type="ECO:0000269" key="8">
    <source>
    </source>
</evidence>
<evidence type="ECO:0000269" key="9">
    <source>
    </source>
</evidence>
<evidence type="ECO:0000269" key="10">
    <source>
    </source>
</evidence>
<evidence type="ECO:0000269" key="11">
    <source>
    </source>
</evidence>
<evidence type="ECO:0000269" key="12">
    <source>
    </source>
</evidence>
<evidence type="ECO:0000269" key="13">
    <source>
    </source>
</evidence>
<evidence type="ECO:0000269" key="14">
    <source>
    </source>
</evidence>
<evidence type="ECO:0000269" key="15">
    <source>
    </source>
</evidence>
<evidence type="ECO:0000269" key="16">
    <source>
    </source>
</evidence>
<evidence type="ECO:0000269" key="17">
    <source>
    </source>
</evidence>
<evidence type="ECO:0000269" key="18">
    <source>
    </source>
</evidence>
<evidence type="ECO:0000269" key="19">
    <source>
    </source>
</evidence>
<evidence type="ECO:0000269" key="20">
    <source>
    </source>
</evidence>
<evidence type="ECO:0000269" key="21">
    <source>
    </source>
</evidence>
<evidence type="ECO:0000269" key="22">
    <source>
    </source>
</evidence>
<evidence type="ECO:0000269" key="23">
    <source>
    </source>
</evidence>
<evidence type="ECO:0000269" key="24">
    <source>
    </source>
</evidence>
<evidence type="ECO:0000269" key="25">
    <source>
    </source>
</evidence>
<evidence type="ECO:0000269" key="26">
    <source>
    </source>
</evidence>
<evidence type="ECO:0000269" key="27">
    <source>
    </source>
</evidence>
<evidence type="ECO:0000269" key="28">
    <source>
    </source>
</evidence>
<evidence type="ECO:0000269" key="29">
    <source>
    </source>
</evidence>
<evidence type="ECO:0000269" key="30">
    <source>
    </source>
</evidence>
<evidence type="ECO:0000269" key="31">
    <source>
    </source>
</evidence>
<evidence type="ECO:0000269" key="32">
    <source>
    </source>
</evidence>
<evidence type="ECO:0000269" key="33">
    <source>
    </source>
</evidence>
<evidence type="ECO:0000269" key="34">
    <source>
    </source>
</evidence>
<evidence type="ECO:0000269" key="35">
    <source>
    </source>
</evidence>
<evidence type="ECO:0000269" key="36">
    <source>
    </source>
</evidence>
<evidence type="ECO:0000269" key="37">
    <source>
    </source>
</evidence>
<evidence type="ECO:0000269" key="38">
    <source>
    </source>
</evidence>
<evidence type="ECO:0000269" key="39">
    <source>
    </source>
</evidence>
<evidence type="ECO:0000269" key="40">
    <source>
    </source>
</evidence>
<evidence type="ECO:0000269" key="41">
    <source>
    </source>
</evidence>
<evidence type="ECO:0000269" key="42">
    <source>
    </source>
</evidence>
<evidence type="ECO:0000269" key="43">
    <source>
    </source>
</evidence>
<evidence type="ECO:0000269" key="44">
    <source>
    </source>
</evidence>
<evidence type="ECO:0000269" key="45">
    <source>
    </source>
</evidence>
<evidence type="ECO:0000269" key="46">
    <source>
    </source>
</evidence>
<evidence type="ECO:0000303" key="47">
    <source>
    </source>
</evidence>
<evidence type="ECO:0000303" key="48">
    <source>
    </source>
</evidence>
<evidence type="ECO:0000305" key="49"/>
<evidence type="ECO:0000305" key="50">
    <source>
    </source>
</evidence>
<evidence type="ECO:0007829" key="51">
    <source>
        <dbReference type="PDB" id="2Z62"/>
    </source>
</evidence>
<evidence type="ECO:0007829" key="52">
    <source>
        <dbReference type="PDB" id="2Z63"/>
    </source>
</evidence>
<evidence type="ECO:0007829" key="53">
    <source>
        <dbReference type="PDB" id="2Z66"/>
    </source>
</evidence>
<evidence type="ECO:0007829" key="54">
    <source>
        <dbReference type="PDB" id="3FXI"/>
    </source>
</evidence>
<evidence type="ECO:0007829" key="55">
    <source>
        <dbReference type="PDB" id="3UL8"/>
    </source>
</evidence>
<evidence type="ECO:0007829" key="56">
    <source>
        <dbReference type="PDB" id="3UL9"/>
    </source>
</evidence>
<evidence type="ECO:0007829" key="57">
    <source>
        <dbReference type="PDB" id="4G8A"/>
    </source>
</evidence>
<evidence type="ECO:0007829" key="58">
    <source>
        <dbReference type="PDB" id="5NAM"/>
    </source>
</evidence>
<evidence type="ECO:0007829" key="59">
    <source>
        <dbReference type="PDB" id="8WTA"/>
    </source>
</evidence>
<comment type="function">
    <text evidence="4 10 12 15 17 19 20 21 25 26 32 36 38 41 45">Transmembrane receptor that functions as a pattern recognition receptor recognizing pathogen- and damage-associated molecular patterns (PAMPs and DAMPs) to induce innate immune responses via downstream signaling pathways (PubMed:10835634, PubMed:15809303, PubMed:16622205, PubMed:17292937, PubMed:17478729, PubMed:20037584, PubMed:20711192, PubMed:23880187, PubMed:27022195, PubMed:29038465, PubMed:17803912). At the plasma membrane, cooperates with LY96 to mediate the innate immune response to bacterial lipopolysaccharide (LPS) (PubMed:27022195). Also involved in LPS-independent inflammatory responses triggered by free fatty acids, such as palmitate, and Ni(2+) (PubMed:20711192). Mechanistically, acts via MYD88, TIRAP and TRAF6, leading to NF-kappa-B activation, cytokine secretion and the inflammatory response (PubMed:10835634, PubMed:21393102, PubMed:27022195, PubMed:36945827, PubMed:9237759). Alternatively, CD14-mediated TLR4 internalization via endocytosis is associated with the initiation of a MYD88-independent signaling via the TICAM1-TBK1-IRF3 axis leading to type I interferon production (PubMed:14517278). In addition to the secretion of proinflammatory cytokines, initiates the activation of NLRP3 inflammasome and formation of a positive feedback loop between autophagy and NF-kappa-B signaling cascade (PubMed:32894580). In complex with TLR6, promotes inflammation in monocytes/macrophages by associating with TLR6 and the receptor CD86 (PubMed:23880187). Upon ligand binding, such as oxLDL or amyloid-beta 42, the TLR4:TLR6 complex is internalized and triggers inflammatory response, leading to NF-kappa-B-dependent production of CXCL1, CXCL2 and CCL9 cytokines, via MYD88 signaling pathway, and CCL5 cytokine, via TICAM1 signaling pathway (PubMed:23880187). In myeloid dendritic cells, vesicular stomatitis virus glycoprotein G but not LPS promotes the activation of IRF7, leading to type I IFN production in a CD14-dependent manner (PubMed:15265881, PubMed:23880187). Required for the migration-promoting effects of ZG16B/PAUF on pancreatic cancer cells.</text>
</comment>
<comment type="subunit">
    <text evidence="1 7 11 14 18 21 22 25 27 28 29 34 36 39 40 41 43">Belongs to the lipopolysaccharide (LPS) receptor, a multi-protein complex containing at least CD14, LY96 and TLR4 (PubMed:11274165). Binding to bacterial LPS leads to homodimerization. Interacts with LY96 via the extracellular domain (PubMed:17803912, PubMed:19252480). Interacts with MYD88 (PubMed:36232715). Interacts (via TIR domains) with TIRAP (By similarity). Interacts with TICAM2 (PubMed:14519765, PubMed:25736436). Interacts with NOX4 (PubMed:15356101). Interacts with CNPY3 (By similarity). Interacts with HSP90B1. The interaction with both CNPY3 and HSP90B1 is required for proper folding in the endoplasmic reticulum. Interacts with MAP3K21; this interaction leads to negative regulation of TLR4 signaling (PubMed:21602844). Interacts with CD36, following CD36 stimulation by oxLDL or amyloid-beta 42, and forms a heterodimer with TLR6 (PubMed:20037584). The trimeric complex is internalized and triggers inflammatory response. LYN kinase activity facilitates TLR4-TLR6 heterodimerization and signal initiation. Interacts with TICAM1 in response to LPS in a WDFY1-dependent manner (PubMed:25736436, PubMed:36232715). Interacts with WDFY1 in response to LPS (By similarity). Interacts with SMPDL3B (By similarity). Interacts with CEACAM1; upon lipopolysaccharide stimulation, forms a complex including TLR4 and the phosphorylated form of SYK and CEACAM1, which in turn, recruits PTPN6 that dephosphorylates SYK, reducing the production of reactive oxygen species (ROS) and lysosome disruption, which in turn, reduces the activity of the inflammasome (By similarity). Interacts with RFTN1; the interaction occurs in response to lipopolysaccharide stimulation (PubMed:27022195). Interacts with SCIMP; the interaction occurs in response to lipopolysaccharide stimulation and is enhanced by phosphorylation of SCIMP by LYN (By similarity). This interaction facilitates the phosphorylation of TLR4 by LYN which elicits a selective cytokine response in macrophages (By similarity). Interacts with TRAF3IP3 (PubMed:30573680). Interacts with TREM1; this interaction enhances TLR4-mediated inflammatory response (PubMed:17098818, PubMed:21393102). Interacts with ZG16B/PAUF (PubMed:36232715). Interacts with CD82; this interaction inhibits TLR4-mediated signaling pathway (PubMed:36945827). Interacts with neutrophil recruitment protein from Aedes aegypti saliva; the interaction probably promotes activation of canonical NF-kappa-B signaling in skin-resident macrophages and subsequent expression of neutrophil chemoattractants (PubMed:38378891).</text>
</comment>
<comment type="subunit">
    <text evidence="31">(Microbial infection) In case of infection, interacts with uropathogenic E.coli protein TcpC.</text>
</comment>
<comment type="subunit">
    <text evidence="33">(Microbial infection) In case of infection, interacts with B.melitensis protein TcpB; TcpB abolishes the TLR4-TIRAP interaction in vitro.</text>
</comment>
<comment type="subunit">
    <text evidence="23">(Microbial infection) Interacts with ebolavirus protein GP; this interaction leads to the production of proinflammatory cytokines and suppressor of cytokine signaling 1/SOCS1.</text>
</comment>
<comment type="interaction">
    <interactant intactId="EBI-528701">
        <id>O00206</id>
    </interactant>
    <interactant intactId="EBI-1632076">
        <id>Q96A54</id>
        <label>ADIPOR1</label>
    </interactant>
    <organismsDiffer>false</organismsDiffer>
    <experiments>2</experiments>
</comment>
<comment type="interaction">
    <interactant intactId="EBI-528701">
        <id>O00206</id>
    </interactant>
    <interactant intactId="EBI-1539247">
        <id>Q9Y6Y9</id>
        <label>LY96</label>
    </interactant>
    <organismsDiffer>false</organismsDiffer>
    <experiments>7</experiments>
</comment>
<comment type="interaction">
    <interactant intactId="EBI-528701">
        <id>O00206</id>
    </interactant>
    <interactant intactId="EBI-5325353">
        <id>P11226</id>
        <label>MBL2</label>
    </interactant>
    <organismsDiffer>false</organismsDiffer>
    <experiments>2</experiments>
</comment>
<comment type="interaction">
    <interactant intactId="EBI-528701">
        <id>O00206</id>
    </interactant>
    <interactant intactId="EBI-447677">
        <id>Q99836</id>
        <label>MYD88</label>
    </interactant>
    <organismsDiffer>false</organismsDiffer>
    <experiments>4</experiments>
</comment>
<comment type="interaction">
    <interactant intactId="EBI-528701">
        <id>O00206</id>
    </interactant>
    <interactant intactId="EBI-11301574">
        <id>Q9NPH5</id>
        <label>NOX4</label>
    </interactant>
    <organismsDiffer>false</organismsDiffer>
    <experiments>4</experiments>
</comment>
<comment type="interaction">
    <interactant intactId="EBI-528701">
        <id>O00206</id>
    </interactant>
    <interactant intactId="EBI-750381">
        <id>O15389</id>
        <label>SIGLEC5</label>
    </interactant>
    <organismsDiffer>false</organismsDiffer>
    <experiments>2</experiments>
</comment>
<comment type="interaction">
    <interactant intactId="EBI-528701">
        <id>O00206</id>
    </interactant>
    <interactant intactId="EBI-12161783">
        <id>O43699-3</id>
        <label>SIGLEC6</label>
    </interactant>
    <organismsDiffer>false</organismsDiffer>
    <experiments>2</experiments>
</comment>
<comment type="interaction">
    <interactant intactId="EBI-528701">
        <id>O00206</id>
    </interactant>
    <interactant intactId="EBI-12857926">
        <id>Q9Y336</id>
        <label>SIGLEC9</label>
    </interactant>
    <organismsDiffer>false</organismsDiffer>
    <experiments>2</experiments>
</comment>
<comment type="interaction">
    <interactant intactId="EBI-528701">
        <id>O00206</id>
    </interactant>
    <interactant intactId="EBI-525927">
        <id>Q86XR7</id>
        <label>TICAM2</label>
    </interactant>
    <organismsDiffer>false</organismsDiffer>
    <experiments>3</experiments>
</comment>
<comment type="interaction">
    <interactant intactId="EBI-528701">
        <id>O00206</id>
    </interactant>
    <interactant intactId="EBI-528644">
        <id>P58753</id>
        <label>TIRAP</label>
    </interactant>
    <organismsDiffer>false</organismsDiffer>
    <experiments>6</experiments>
</comment>
<comment type="interaction">
    <interactant intactId="EBI-528701">
        <id>O00206</id>
    </interactant>
    <interactant intactId="EBI-528701">
        <id>O00206</id>
        <label>TLR4</label>
    </interactant>
    <organismsDiffer>false</organismsDiffer>
    <experiments>3</experiments>
</comment>
<comment type="interaction">
    <interactant intactId="EBI-528701">
        <id>O00206</id>
    </interactant>
    <interactant intactId="EBI-13940779">
        <id>Q9Y2C9</id>
        <label>TLR6</label>
    </interactant>
    <organismsDiffer>false</organismsDiffer>
    <experiments>2</experiments>
</comment>
<comment type="interaction">
    <interactant intactId="EBI-528701">
        <id>O00206</id>
    </interactant>
    <interactant intactId="EBI-9979894">
        <id>P24821</id>
        <label>TNC</label>
    </interactant>
    <organismsDiffer>false</organismsDiffer>
    <experiments>4</experiments>
</comment>
<comment type="interaction">
    <interactant intactId="EBI-15745059">
        <id>O00206-1</id>
    </interactant>
    <interactant intactId="EBI-1539247">
        <id>Q9Y6Y9</id>
        <label>LY96</label>
    </interactant>
    <organismsDiffer>false</organismsDiffer>
    <experiments>5</experiments>
</comment>
<comment type="interaction">
    <interactant intactId="EBI-15745059">
        <id>O00206-1</id>
    </interactant>
    <interactant intactId="EBI-15745025">
        <id>P49278</id>
        <label>DERP2</label>
    </interactant>
    <organismsDiffer>true</organismsDiffer>
    <experiments>3</experiments>
</comment>
<comment type="subcellular location">
    <subcellularLocation>
        <location evidence="7 18 25 28 36 40 41 44 45">Cell membrane</location>
        <topology evidence="7">Single-pass type I membrane protein</topology>
    </subcellularLocation>
    <subcellularLocation>
        <location evidence="36">Early endosome</location>
    </subcellularLocation>
    <subcellularLocation>
        <location evidence="1">Cell projection</location>
        <location evidence="1">Ruffle</location>
    </subcellularLocation>
    <text evidence="25 40">Upon complex formation with CD36 and TLR6, internalized through dynamin-dependent endocytosis (PubMed:20037584). Colocalizes with RFTN1 at cell membrane and then together with RFTN1 moves to endosomes, upon lipopolysaccharide stimulation. Co-localizes with ZG16B/PAUF at the cell membrane of pancreatic cancer cells (PubMed:36232715).</text>
</comment>
<comment type="alternative products">
    <event type="alternative splicing"/>
    <isoform>
        <id>O00206-1</id>
        <name>1</name>
        <sequence type="displayed"/>
    </isoform>
    <isoform>
        <id>O00206-2</id>
        <name>2</name>
        <sequence type="described" ref="VSP_035794"/>
    </isoform>
    <isoform>
        <id>O00206-3</id>
        <name>3</name>
        <sequence type="described" ref="VSP_035793"/>
    </isoform>
</comment>
<comment type="tissue specificity">
    <text evidence="36 40 45 46">Highly expressed in placenta, spleen and peripheral blood leukocytes (PubMed:9237759, PubMed:9435236). Detected in monocytes, macrophages, dendritic cells and several types of T-cells (PubMed:27022195, PubMed:9237759). Expressed in pancreatic cancer cells but not in normal pancreatic cells (at protein level) (PubMed:36232715).</text>
</comment>
<comment type="induction">
    <text evidence="12">By LPS in plasmacytoid dendritic cells.</text>
</comment>
<comment type="domain">
    <text evidence="14">The TIR domain mediates interaction with NOX4.</text>
</comment>
<comment type="PTM">
    <text evidence="9 44">N-Glycosylation of Asn-526 and Asn-575 by STT3A-containing OST-A complex is necessary for the expression of TLR4 on the cell surface and the LPS-response (PubMed:11706042, PubMed:38670073). Likewise, mutants lacking two or more of the other N-glycosylation sites were deficient in interaction with LPS (PubMed:11706042, PubMed:38670073).</text>
</comment>
<comment type="PTM">
    <text evidence="1">Phosphorylated on tyrosine residues by LYN after binding lipopolysaccharide.</text>
</comment>
<comment type="PTM">
    <text evidence="42">Ubiquitinated by RNF128 via 'Lys-28'-linked polyubiquitin chains, leading to proteasomal degradation.</text>
</comment>
<comment type="polymorphism">
    <text evidence="4">Allele TLR4*B (Gly-299, Ile-399) is associated with a blunted response to inhaled LPS.</text>
</comment>
<comment type="miscellaneous">
    <text evidence="50">His-456 and His-458 are found in TLR4 of human and several other primate species and may be responsible for inflammatory responses triggered by nickel (Ni(2+)). Ni(2+) may cross-link the two receptor monomers through specific histidines, triggering the formation of a dimer that structurally resembles that induced by LPS. This process may be the basis for the development of contact allergy to Ni(2+). A mouse model of contact allergy to Ni(2+) in which TLR4-deficient mice expresses human TLR4 has been proposed.</text>
</comment>
<comment type="similarity">
    <text evidence="49">Belongs to the Toll-like receptor family.</text>
</comment>
<comment type="caution">
    <text evidence="37 49">In some plant proteins and in human SARM1, the TIR domain has NAD(+) hydrolase (NADase) activity (PubMed:28334607). However, despite the presence of the catalytic Asp residue, the isolated TIR domain of human TLR4 lacks NADase activity (PubMed:28334607). Based on this, it is unlikely that Toll-like receptors have NADase activity.</text>
</comment>
<comment type="online information" name="Protein Spotlight">
    <link uri="https://www.proteinspotlight.org/back_issues/134"/>
    <text>Zips, necklaces and mobile telephones - Issue 134 of December 2011</text>
</comment>
<organism>
    <name type="scientific">Homo sapiens</name>
    <name type="common">Human</name>
    <dbReference type="NCBI Taxonomy" id="9606"/>
    <lineage>
        <taxon>Eukaryota</taxon>
        <taxon>Metazoa</taxon>
        <taxon>Chordata</taxon>
        <taxon>Craniata</taxon>
        <taxon>Vertebrata</taxon>
        <taxon>Euteleostomi</taxon>
        <taxon>Mammalia</taxon>
        <taxon>Eutheria</taxon>
        <taxon>Euarchontoglires</taxon>
        <taxon>Primates</taxon>
        <taxon>Haplorrhini</taxon>
        <taxon>Catarrhini</taxon>
        <taxon>Hominidae</taxon>
        <taxon>Homo</taxon>
    </lineage>
</organism>
<protein>
    <recommendedName>
        <fullName>Toll-like receptor 4</fullName>
    </recommendedName>
    <alternativeName>
        <fullName>hToll</fullName>
    </alternativeName>
    <cdAntigenName>CD284</cdAntigenName>
</protein>
<accession>O00206</accession>
<accession>A8K1Y8</accession>
<accession>A9XLP9</accession>
<accession>A9XLQ0</accession>
<accession>A9XLQ1</accession>
<accession>B4E194</accession>
<accession>D1CS52</accession>
<accession>D1CS53</accession>
<accession>Q5VZI8</accession>
<accession>Q5VZI9</accession>
<accession>Q9UK78</accession>
<accession>Q9UM57</accession>